<accession>P07101</accession>
<accession>B7ZL70</accession>
<accession>B7ZL73</accession>
<accession>Q0PWM2</accession>
<accession>Q0PWM3</accession>
<accession>Q15585</accession>
<accession>Q15588</accession>
<accession>Q15589</accession>
<accession>Q2M3B4</accession>
<sequence length="528" mass="58600">MPTPDATTPQAKGFRRAVSELDAKQAEAIMVRGQGAPGPSLTGSPWPGTAAPAASYTPTPRSPRFIGRRQSLIEDARKEREAAVAAAAAAVPSEPGDPLEAVAFEEKEGKAVLNLLFSPRATKPSALSRAVKVFETFEAKIHHLETRPAQRPRAGGPHLEYFVRLEVRRGDLAALLSGVRQVSEDVRSPAGPKVPWFPRKVSELDKCHHLVTKFDPDLDLDHPGFSDQVYRQRRKLIAEIAFQYRHGDPIPRVEYTAEEIATWKEVYTTLKGLYATHACGEHLEAFALLERFSGYREDNIPQLEDVSRFLKERTGFQLRPVAGLLSARDFLASLAFRVFQCTQYIRHASSPMHSPEPDCCHELLGHVPMLADRTFAQFSQDIGLASLGASDEEIEKLSTLYWFTVEFGLCKQNGEVKAYGAGLLSSYGELLHCLSEEPEIRAFDPEAAAVQPYQDQTYQSVYFVSESFSDAKDKLRSYASRIQRPFSVKFDPYTLAIDVLDSPQAVRRSLEGVQDELDTLAHALSAIG</sequence>
<feature type="chain" id="PRO_0000205561" description="Tyrosine 3-monooxygenase">
    <location>
        <begin position="1"/>
        <end position="528"/>
    </location>
</feature>
<feature type="region of interest" description="Disordered" evidence="3">
    <location>
        <begin position="33"/>
        <end position="65"/>
    </location>
</feature>
<feature type="compositionally biased region" description="Low complexity" evidence="3">
    <location>
        <begin position="47"/>
        <end position="59"/>
    </location>
</feature>
<feature type="binding site" evidence="1">
    <location>
        <position position="361"/>
    </location>
    <ligand>
        <name>Fe cation</name>
        <dbReference type="ChEBI" id="CHEBI:24875"/>
    </ligand>
</feature>
<feature type="binding site" evidence="1">
    <location>
        <position position="366"/>
    </location>
    <ligand>
        <name>Fe cation</name>
        <dbReference type="ChEBI" id="CHEBI:24875"/>
    </ligand>
</feature>
<feature type="binding site" evidence="1">
    <location>
        <position position="406"/>
    </location>
    <ligand>
        <name>Fe cation</name>
        <dbReference type="ChEBI" id="CHEBI:24875"/>
    </ligand>
</feature>
<feature type="site" description="Important for substrate specificity" evidence="1">
    <location>
        <position position="455"/>
    </location>
</feature>
<feature type="modified residue" description="Phosphoserine; by CaMK2" evidence="13 28">
    <location>
        <position position="19"/>
    </location>
</feature>
<feature type="modified residue" description="Phosphoserine" evidence="28 29 33">
    <location>
        <position position="62"/>
    </location>
</feature>
<feature type="modified residue" description="Phosphoserine; by CaMK2 and PKA" evidence="13 33">
    <location>
        <position position="71"/>
    </location>
</feature>
<feature type="modified residue" description="Phosphoserine" evidence="2">
    <location>
        <position position="502"/>
    </location>
</feature>
<feature type="splice variant" id="VSP_000544" description="In isoform 2 and isoform 6." evidence="40 41 42">
    <location>
        <begin position="31"/>
        <end position="61"/>
    </location>
</feature>
<feature type="splice variant" id="VSP_000543" description="In isoform 1." evidence="43">
    <location>
        <begin position="31"/>
        <end position="34"/>
    </location>
</feature>
<feature type="splice variant" id="VSP_000541" description="In isoform 4 and isoform 5." evidence="40 41">
    <location>
        <begin position="35"/>
        <end position="61"/>
    </location>
</feature>
<feature type="splice variant" id="VSP_054338" description="In isoform 5 and isoform 6." evidence="41">
    <location>
        <begin position="264"/>
        <end position="357"/>
    </location>
</feature>
<feature type="sequence variant" id="VAR_072862" description="Found in a patient with ARSEGS; uncertain significance; dbSNP:rs766704202." evidence="25">
    <original>S</original>
    <variation>C</variation>
    <location>
        <position position="19"/>
    </location>
</feature>
<feature type="sequence variant" id="VAR_014025" description="In dbSNP:rs6356." evidence="4 9 22 31 36">
    <original>V</original>
    <variation>M</variation>
    <location>
        <position position="112"/>
    </location>
</feature>
<feature type="sequence variant" id="VAR_072863" description="In ARSEGS; loss of over 80% of tyrosine 3-monooxygenase activity." evidence="20 27">
    <original>C</original>
    <variation>Y</variation>
    <location>
        <position position="207"/>
    </location>
</feature>
<feature type="sequence variant" id="VAR_072864" description="In ARSEGS; complete loss of tyrosine 3-monooxygenase activity; dbSNP:rs1846145669." evidence="20 27">
    <original>D</original>
    <variation>G</variation>
    <location>
        <position position="227"/>
    </location>
</feature>
<feature type="sequence variant" id="VAR_014026" description="In ARSEGS; loss of over 80% of tyrosine 3-monooxygenase activity; shifted substrate specificity from tyrosine to phenylalanine and Dopa; dbSNP:rs80338892." evidence="17 23 27 37">
    <original>R</original>
    <variation>H</variation>
    <location>
        <position position="233"/>
    </location>
</feature>
<feature type="sequence variant" id="VAR_014027" description="In ARSEGS; severe parkinsonian symptoms in early infancy; strongly reduced stability and tyrosine 3-monooxygenase activity; rare mutation; dbSNP:rs121917763." evidence="27 35 36">
    <original>L</original>
    <variation>P</variation>
    <location>
        <position position="236"/>
    </location>
</feature>
<feature type="sequence variant" id="VAR_072865" description="In ARSEGS; loss of over 80% of tyrosine 3-monooxygenase activity; dbSNP:rs1260455415." evidence="20 27">
    <original>A</original>
    <variation>T</variation>
    <location>
        <position position="241"/>
    </location>
</feature>
<feature type="sequence variant" id="VAR_072866" description="In ARSEGS; loss of about 40% of tyrosine 3-monooxygenase activity." evidence="11 27">
    <original>H</original>
    <variation>Y</variation>
    <location>
        <position position="246"/>
    </location>
</feature>
<feature type="sequence variant" id="VAR_072867" description="In ARSEGS; loss of about 50% of tyrosine 3-monooxygenase activity; shifted substrate specificity from tyrosine to phenylalanine and Dopa; dbSNP:rs762304556." evidence="17 27">
    <original>G</original>
    <variation>S</variation>
    <location>
        <position position="247"/>
    </location>
</feature>
<feature type="sequence variant" id="VAR_071715" description="In ARSEGS; dbSNP:rs1846131487." evidence="22">
    <original>P</original>
    <variation>L</variation>
    <location>
        <position position="251"/>
    </location>
</feature>
<feature type="sequence variant" id="VAR_072868" description="In ARSEGS; complete loss of tyrosine 3-monooxygenase activity." evidence="20 27">
    <original>E</original>
    <variation>G</variation>
    <location>
        <position position="259"/>
    </location>
</feature>
<feature type="sequence variant" id="VAR_014028" description="In ARSEGS; parkinsonian symptoms in infancy; no effect on tyrosine 3-monooxygenase activity; dbSNP:rs28934581." evidence="7 27">
    <original>T</original>
    <variation>P</variation>
    <location>
        <position position="276"/>
    </location>
</feature>
<feature type="sequence variant" id="VAR_071716" description="In ARSEGS; dbSNP:rs1273610334." evidence="22">
    <original>C</original>
    <variation>F</variation>
    <location>
        <position position="279"/>
    </location>
</feature>
<feature type="sequence variant" id="VAR_072869" description="In ARSEGS; dbSNP:rs755536257." evidence="19">
    <original>G</original>
    <variation>R</variation>
    <location>
        <position position="294"/>
    </location>
</feature>
<feature type="sequence variant" id="VAR_071717" description="In ARSEGS; dbSNP:rs199961079." evidence="22">
    <original>R</original>
    <variation>Q</variation>
    <location>
        <position position="296"/>
    </location>
</feature>
<feature type="sequence variant" id="VAR_072870" description="In ARSEGS; loss of over 80% of tyrosine 3-monooxygenase activity." evidence="18 27">
    <original>P</original>
    <variation>A</variation>
    <location>
        <position position="301"/>
    </location>
</feature>
<feature type="sequence variant" id="VAR_072871" description="In ARSEGS; complete loss of tyrosine 3-monooxygenase activity." evidence="6 27">
    <original>F</original>
    <variation>S</variation>
    <location>
        <position position="309"/>
    </location>
</feature>
<feature type="sequence variant" id="VAR_014029" description="In ARSEGS; parkinsonian symptoms in infancy; loss of about 80% of tyrosine 3-monooxygenase activity; dbSNP:rs121917764." evidence="7 27">
    <original>T</original>
    <variation>M</variation>
    <location>
        <position position="314"/>
    </location>
</feature>
<feature type="sequence variant" id="VAR_071718" description="In ARSEGS; dbSNP:rs1288483479." evidence="19 23">
    <original>G</original>
    <variation>S</variation>
    <location>
        <position position="315"/>
    </location>
</feature>
<feature type="sequence variant" id="VAR_072872" description="In ARSEGS; complete loss of tyrosine 3-monooxygenase activity." evidence="18 27">
    <original>R</original>
    <variation>P</variation>
    <location>
        <position position="319"/>
    </location>
</feature>
<feature type="sequence variant" id="VAR_072873" description="In ARSEGS; complete loss of tyrosine 3-monooxygenase activity; dbSNP:rs1428589694." evidence="12 27">
    <original>R</original>
    <variation>W</variation>
    <location>
        <position position="328"/>
    </location>
</feature>
<feature type="sequence variant" id="VAR_014030" description="In ARSEGS; parkinsonian symptoms in infancy; no effect on tyrosine 3-monooxygenase activity; dbSNP:rs28934580." evidence="7 27">
    <original>R</original>
    <variation>H</variation>
    <location>
        <position position="337"/>
    </location>
</feature>
<feature type="sequence variant" id="VAR_072874" description="In ARSEGS; loss of over 80% of tyrosine 3-monooxygenase activity; dbSNP:rs121917765." evidence="5 27">
    <original>C</original>
    <variation>F</variation>
    <location>
        <position position="359"/>
    </location>
</feature>
<feature type="sequence variant" id="VAR_072875" description="In ARSEGS; loss of over 80% of tyrosine 3-monooxygenase activity; shifted substrate specificity from tyrosine to phenylalanine and Dopa; dbSNP:rs763198914." evidence="18 27">
    <original>F</original>
    <variation>L</variation>
    <location>
        <position position="375"/>
    </location>
</feature>
<feature type="sequence variant" id="VAR_072876" description="In ARSEGS; loss of over 80% of tyrosine 3-monooxygenase activity." evidence="10 27">
    <original>A</original>
    <variation>V</variation>
    <location>
        <position position="376"/>
    </location>
</feature>
<feature type="sequence variant" id="VAR_071719" description="In ARSEGS; dbSNP:rs1554922725." evidence="23">
    <original>I</original>
    <variation>T</variation>
    <location>
        <position position="382"/>
    </location>
</feature>
<feature type="sequence variant" id="VAR_072877" description="In ARSEGS; dbSNP:rs763039181." evidence="19">
    <original>A</original>
    <variation>V</variation>
    <location>
        <position position="385"/>
    </location>
</feature>
<feature type="sequence variant" id="VAR_072878" description="In ARSEGS; no effect on tyrosine 3-monooxygenase activity." evidence="15 27">
    <original>L</original>
    <variation>M</variation>
    <location>
        <position position="387"/>
    </location>
</feature>
<feature type="sequence variant" id="VAR_072879" description="In ARSEGS; complete loss of tyrosine 3-monooxygenase activity." evidence="19 20 27">
    <original>I</original>
    <variation>T</variation>
    <location>
        <position position="394"/>
    </location>
</feature>
<feature type="sequence variant" id="VAR_072880" description="In ARSEGS; loss of over 80% of tyrosine 3-monooxygenase activity; dbSNP:rs1057520384." evidence="12 27">
    <original>T</original>
    <variation>M</variation>
    <location>
        <position position="399"/>
    </location>
</feature>
<feature type="sequence variant" id="VAR_072881" description="In ARSEGS; dbSNP:rs745551241." evidence="19">
    <original>G</original>
    <variation>R</variation>
    <location>
        <position position="408"/>
    </location>
</feature>
<feature type="sequence variant" id="VAR_014031" description="In ARSEGS; loss of over 80% of tyrosine 3-monooxygenase activity; reduced affinity for L-tyrosine; dbSNP:rs121917762." evidence="27 32 34">
    <original>Q</original>
    <variation>K</variation>
    <location>
        <position position="412"/>
    </location>
</feature>
<feature type="sequence variant" id="VAR_072882" description="In ARSEGS; loss of over 80% of tyrosine 3-monooxygenase activity; dbSNP:rs370962049." evidence="16 18 27">
    <original>G</original>
    <variation>R</variation>
    <location>
        <position position="414"/>
    </location>
</feature>
<feature type="sequence variant" id="VAR_071720" description="In ARSEGS; phenotype with prominent levodopa-responsive myoconus-dystonia (M-D); dbSNP:rs1264884607." evidence="24 25">
    <original>G</original>
    <variation>R</variation>
    <location>
        <position position="428"/>
    </location>
</feature>
<feature type="sequence variant" id="VAR_072883" description="In ARSEGS; complete loss of tyrosine 3-monooxygenase activity; dbSNP:rs367874223." evidence="26 27">
    <original>R</original>
    <variation>P</variation>
    <location>
        <position position="441"/>
    </location>
</feature>
<feature type="sequence variant" id="VAR_072884" description="In ARSEGS; loss of over 80% of tyrosine 3-monooxygenase activity." evidence="18 27">
    <original>S</original>
    <variation>G</variation>
    <location>
        <position position="467"/>
    </location>
</feature>
<feature type="sequence variant" id="VAR_072885" description="In ARSEGS; complete loss of tyrosine 3-monooxygenase activity; dbSNP:rs767635052." evidence="15 27">
    <original>P</original>
    <variation>L</variation>
    <location>
        <position position="492"/>
    </location>
</feature>
<feature type="sequence variant" id="VAR_014032" description="In ARSEGS; parkinsonian symptoms in infancy; no effect on tyrosine 3-monooxygenase activity; dbSNP:rs45471299." evidence="7 27">
    <original>T</original>
    <variation>M</variation>
    <location>
        <position position="494"/>
    </location>
</feature>
<feature type="sequence variant" id="VAR_072886" description="In ARSEGS; loss of over 80% of tyrosine 3-monooxygenase activity; dbSNP:rs771351747." evidence="10 11 26 27">
    <original>D</original>
    <variation>G</variation>
    <location>
        <position position="498"/>
    </location>
</feature>
<feature type="sequence variant" id="VAR_014033" description="In dbSNP:rs1800033." evidence="38">
    <original>V</original>
    <variation>M</variation>
    <location>
        <position position="499"/>
    </location>
</feature>
<feature type="sequence variant" id="VAR_072887" description="In ARSEGS; complete loss of tyrosine 3-monooxygenase activity." evidence="16 27">
    <original>L</original>
    <variation>Q</variation>
    <location>
        <position position="510"/>
    </location>
</feature>
<feature type="mutagenesis site" description="Affects subcellular localization. Accumulates mainly in the soma of the neuroblastoma cells." evidence="29">
    <original>S</original>
    <variation>A</variation>
    <location>
        <position position="62"/>
    </location>
</feature>
<feature type="mutagenesis site" description="Does not affect subcellular localization. Distributed throughout the soma and neurites." evidence="29">
    <original>S</original>
    <variation>E</variation>
    <location>
        <position position="62"/>
    </location>
</feature>
<feature type="mutagenesis site" description="Suppresses feedback inhibition induced by dopamine. Suppresses feedback inhibition induced by dopamine; when associated with A-207." evidence="30">
    <original>S</original>
    <variation>E</variation>
    <location>
        <position position="71"/>
    </location>
</feature>
<feature type="mutagenesis site" description="Suppresses the decrease in tyrosine 3-monooxygenase activity induced by NEM modification. Suppresses feedback inhibition induced by dopamine; when associated with E-71." evidence="30">
    <original>C</original>
    <variation>A</variation>
    <location>
        <position position="207"/>
    </location>
</feature>
<feature type="sequence conflict" description="In Ref. 8; AAI43615." evidence="44" ref="8">
    <original>R</original>
    <variation>H</variation>
    <location>
        <position position="373"/>
    </location>
</feature>
<feature type="sequence conflict" description="In Ref. 1; AAA61179, 2; CAA28908 and 3; CAA68472." evidence="44" ref="1 2 3">
    <original>Y</original>
    <variation>S</variation>
    <location>
        <position position="401"/>
    </location>
</feature>
<feature type="helix" evidence="48">
    <location>
        <begin position="201"/>
        <end position="206"/>
    </location>
</feature>
<feature type="turn" evidence="48">
    <location>
        <begin position="216"/>
        <end position="218"/>
    </location>
</feature>
<feature type="turn" evidence="48">
    <location>
        <begin position="223"/>
        <end position="226"/>
    </location>
</feature>
<feature type="helix" evidence="48">
    <location>
        <begin position="228"/>
        <end position="243"/>
    </location>
</feature>
<feature type="helix" evidence="48">
    <location>
        <begin position="257"/>
        <end position="277"/>
    </location>
</feature>
<feature type="helix" evidence="48">
    <location>
        <begin position="280"/>
        <end position="292"/>
    </location>
</feature>
<feature type="strand" evidence="49">
    <location>
        <begin position="297"/>
        <end position="299"/>
    </location>
</feature>
<feature type="helix" evidence="48">
    <location>
        <begin position="303"/>
        <end position="314"/>
    </location>
</feature>
<feature type="strand" evidence="48">
    <location>
        <begin position="317"/>
        <end position="320"/>
    </location>
</feature>
<feature type="helix" evidence="48">
    <location>
        <begin position="327"/>
        <end position="334"/>
    </location>
</feature>
<feature type="turn" evidence="48">
    <location>
        <begin position="335"/>
        <end position="337"/>
    </location>
</feature>
<feature type="strand" evidence="48">
    <location>
        <begin position="338"/>
        <end position="341"/>
    </location>
</feature>
<feature type="helix" evidence="48">
    <location>
        <begin position="359"/>
        <end position="365"/>
    </location>
</feature>
<feature type="helix" evidence="48">
    <location>
        <begin position="367"/>
        <end position="370"/>
    </location>
</feature>
<feature type="helix" evidence="48">
    <location>
        <begin position="373"/>
        <end position="386"/>
    </location>
</feature>
<feature type="helix" evidence="48">
    <location>
        <begin position="391"/>
        <end position="403"/>
    </location>
</feature>
<feature type="turn" evidence="48">
    <location>
        <begin position="404"/>
        <end position="407"/>
    </location>
</feature>
<feature type="strand" evidence="48">
    <location>
        <begin position="409"/>
        <end position="412"/>
    </location>
</feature>
<feature type="strand" evidence="48">
    <location>
        <begin position="415"/>
        <end position="418"/>
    </location>
</feature>
<feature type="helix" evidence="48">
    <location>
        <begin position="421"/>
        <end position="424"/>
    </location>
</feature>
<feature type="helix" evidence="48">
    <location>
        <begin position="427"/>
        <end position="433"/>
    </location>
</feature>
<feature type="strand" evidence="48">
    <location>
        <begin position="435"/>
        <end position="442"/>
    </location>
</feature>
<feature type="helix" evidence="48">
    <location>
        <begin position="445"/>
        <end position="449"/>
    </location>
</feature>
<feature type="strand" evidence="48">
    <location>
        <begin position="455"/>
        <end position="457"/>
    </location>
</feature>
<feature type="strand" evidence="48">
    <location>
        <begin position="460"/>
        <end position="466"/>
    </location>
</feature>
<feature type="helix" evidence="48">
    <location>
        <begin position="468"/>
        <end position="480"/>
    </location>
</feature>
<feature type="strand" evidence="48">
    <location>
        <begin position="485"/>
        <end position="491"/>
    </location>
</feature>
<feature type="turn" evidence="48">
    <location>
        <begin position="492"/>
        <end position="495"/>
    </location>
</feature>
<feature type="strand" evidence="48">
    <location>
        <begin position="496"/>
        <end position="500"/>
    </location>
</feature>
<feature type="helix" evidence="48">
    <location>
        <begin position="503"/>
        <end position="526"/>
    </location>
</feature>
<organism>
    <name type="scientific">Homo sapiens</name>
    <name type="common">Human</name>
    <dbReference type="NCBI Taxonomy" id="9606"/>
    <lineage>
        <taxon>Eukaryota</taxon>
        <taxon>Metazoa</taxon>
        <taxon>Chordata</taxon>
        <taxon>Craniata</taxon>
        <taxon>Vertebrata</taxon>
        <taxon>Euteleostomi</taxon>
        <taxon>Mammalia</taxon>
        <taxon>Eutheria</taxon>
        <taxon>Euarchontoglires</taxon>
        <taxon>Primates</taxon>
        <taxon>Haplorrhini</taxon>
        <taxon>Catarrhini</taxon>
        <taxon>Hominidae</taxon>
        <taxon>Homo</taxon>
    </lineage>
</organism>
<keyword id="KW-0002">3D-structure</keyword>
<keyword id="KW-0025">Alternative splicing</keyword>
<keyword id="KW-0127">Catecholamine biosynthesis</keyword>
<keyword id="KW-0966">Cell projection</keyword>
<keyword id="KW-0963">Cytoplasm</keyword>
<keyword id="KW-0968">Cytoplasmic vesicle</keyword>
<keyword id="KW-0225">Disease variant</keyword>
<keyword id="KW-1023">Dystonia</keyword>
<keyword id="KW-0408">Iron</keyword>
<keyword id="KW-0479">Metal-binding</keyword>
<keyword id="KW-0503">Monooxygenase</keyword>
<keyword id="KW-0530">Neurotransmitter biosynthesis</keyword>
<keyword id="KW-0539">Nucleus</keyword>
<keyword id="KW-0560">Oxidoreductase</keyword>
<keyword id="KW-0907">Parkinson disease</keyword>
<keyword id="KW-0908">Parkinsonism</keyword>
<keyword id="KW-0597">Phosphoprotein</keyword>
<keyword id="KW-1267">Proteomics identification</keyword>
<keyword id="KW-1185">Reference proteome</keyword>
<keyword id="KW-0770">Synapse</keyword>
<proteinExistence type="evidence at protein level"/>
<protein>
    <recommendedName>
        <fullName>Tyrosine 3-monooxygenase</fullName>
        <ecNumber evidence="8 13 14 27 30 34 39">1.14.16.2</ecNumber>
    </recommendedName>
    <alternativeName>
        <fullName>Tyrosine 3-hydroxylase</fullName>
        <shortName>TH</shortName>
    </alternativeName>
</protein>
<comment type="function">
    <text evidence="1 2 8 13 14 27 30 34 39">Catalyzes the conversion of L-tyrosine to L-dihydroxyphenylalanine (L-Dopa), the rate-limiting step in the biosynthesis of catecholamines, dopamine, noradrenaline, and adrenaline. Uses tetrahydrobiopterin and molecular oxygen to convert tyrosine to L-Dopa (PubMed:15287903, PubMed:1680128, PubMed:17391063, PubMed:24753243, PubMed:34922205, PubMed:8528210, Ref.18). In addition to tyrosine, is able to catalyze the hydroxylation of phenylalanine and tryptophan with lower specificity (By similarity). Positively regulates the regression of retinal hyaloid vessels during postnatal development (By similarity).</text>
</comment>
<comment type="function">
    <molecule>Isoform 5</molecule>
    <text evidence="14">Lacks catalytic activity.</text>
</comment>
<comment type="function">
    <molecule>Isoform 6</molecule>
    <text evidence="14">Lacks catalytic activity.</text>
</comment>
<comment type="catalytic activity">
    <reaction evidence="8 13 14 27 30 34 39">
        <text>(6R)-L-erythro-5,6,7,8-tetrahydrobiopterin + L-tyrosine + O2 = (4aS,6R)-4a-hydroxy-L-erythro-5,6,7,8-tetrahydrobiopterin + L-dopa</text>
        <dbReference type="Rhea" id="RHEA:18201"/>
        <dbReference type="ChEBI" id="CHEBI:15379"/>
        <dbReference type="ChEBI" id="CHEBI:15642"/>
        <dbReference type="ChEBI" id="CHEBI:57504"/>
        <dbReference type="ChEBI" id="CHEBI:58315"/>
        <dbReference type="ChEBI" id="CHEBI:59560"/>
        <dbReference type="EC" id="1.14.16.2"/>
    </reaction>
    <physiologicalReaction direction="left-to-right" evidence="45">
        <dbReference type="Rhea" id="RHEA:18202"/>
    </physiologicalReaction>
</comment>
<comment type="cofactor">
    <cofactor evidence="1">
        <name>Fe(2+)</name>
        <dbReference type="ChEBI" id="CHEBI:29033"/>
    </cofactor>
</comment>
<comment type="activity regulation">
    <text evidence="8 13 30 33">Inhibited in feedback fashion by the catecholamine neurotransmitters, especially by dopamine in competition with tetrahydrobiopterin (PubMed:15287903). Phosphorylation of several Ser/Thr residues in the N-terminus regulates the catalytic activity (PubMed:1680128, PubMed:7901013). Ser-62 and Ser-71 are readily phosphorylated to activate the catalytic activity (PubMed:1680128, PubMed:7901013). A Cysteine modification induced by N-ethylmaleimide (NEM), inhibits tyrosine 3-monooxygenase activity through the modification of the Cys-207 (PubMed:34922205).</text>
</comment>
<comment type="biophysicochemical properties">
    <kinetics>
        <KM evidence="27">39 uM for 6R-tetrahydrobiopterin</KM>
        <KM evidence="27">5.1 uM for L-tyrosine</KM>
        <KM evidence="30">35 uM for L-tyrosine (in presence of N-ethylmaleimide)</KM>
        <KM evidence="30">15 uM for L-tyrosine</KM>
        <KM evidence="30">57 uM for 6R-tetrahydrobiopterin</KM>
        <KM evidence="30">32 uM for 6R-tetrahydrobiopterin (in presence of N-ethylmaleimide)</KM>
        <Vmax evidence="27">591.0 nmol/min/mg enzyme with 6R-tetrahydrobiopterin as substrate</Vmax>
        <Vmax evidence="27">2460.0 nmol/min/mg enzyme with L-tyrosine as substrate</Vmax>
        <Vmax evidence="30">35.0 nmol/min/mg enzyme with L-tyrosine as substrate (in presence of N-ethylmaleimide)</Vmax>
        <Vmax evidence="30">141.0 nmol/min/mg enzyme with L-tyrosine as substrate</Vmax>
        <Vmax evidence="30">26.0 nmol/min/mg enzyme with 6R-tetrahydrobiopterin as substrate (in presence of N-ethylmaleimide)</Vmax>
        <Vmax evidence="30">138.0 nmol/min/mg enzyme with 6R-tetrahydrobiopterin as substrate</Vmax>
    </kinetics>
</comment>
<comment type="pathway">
    <text evidence="14">Catecholamine biosynthesis; dopamine biosynthesis; dopamine from L-tyrosine: step 1/2.</text>
</comment>
<comment type="subunit">
    <text evidence="1 28 39">Homotetramer (PubMed:24947669, Ref.18). Interacts (when phosphorylated at Ser-19) with YWHAG; one YWHAG dimer binds to one TH tetramer and this interaction may influence the phosphorylation and dephosphorylation of other sites (PubMed:24947669). Interacts with NT5DC2; the interaction results in reduced phosphorylation and decreased catalytic activity of TH (By similarity).</text>
</comment>
<comment type="interaction">
    <interactant intactId="EBI-12001016">
        <id>P07101-3</id>
    </interactant>
    <interactant intactId="EBI-725950">
        <id>P29762</id>
        <label>CRABP1</label>
    </interactant>
    <organismsDiffer>false</organismsDiffer>
    <experiments>3</experiments>
</comment>
<comment type="interaction">
    <interactant intactId="EBI-12001016">
        <id>P07101-3</id>
    </interactant>
    <interactant intactId="EBI-7060731">
        <id>P61978-2</id>
        <label>HNRNPK</label>
    </interactant>
    <organismsDiffer>false</organismsDiffer>
    <experiments>3</experiments>
</comment>
<comment type="interaction">
    <interactant intactId="EBI-12001016">
        <id>P07101-3</id>
    </interactant>
    <interactant intactId="EBI-724076">
        <id>Q99750</id>
        <label>MDFI</label>
    </interactant>
    <organismsDiffer>false</organismsDiffer>
    <experiments>3</experiments>
</comment>
<comment type="interaction">
    <interactant intactId="EBI-12001016">
        <id>P07101-3</id>
    </interactant>
    <interactant intactId="EBI-18939222">
        <id>P08651-5</id>
        <label>NFIC</label>
    </interactant>
    <organismsDiffer>false</organismsDiffer>
    <experiments>3</experiments>
</comment>
<comment type="interaction">
    <interactant intactId="EBI-12001016">
        <id>P07101-3</id>
    </interactant>
    <interactant intactId="EBI-348567">
        <id>O75928-2</id>
        <label>PIAS2</label>
    </interactant>
    <organismsDiffer>false</organismsDiffer>
    <experiments>3</experiments>
</comment>
<comment type="interaction">
    <interactant intactId="EBI-12001016">
        <id>P07101-3</id>
    </interactant>
    <interactant intactId="EBI-11529177">
        <id>Q9UHX1-2</id>
        <label>PUF60</label>
    </interactant>
    <organismsDiffer>false</organismsDiffer>
    <experiments>3</experiments>
</comment>
<comment type="interaction">
    <interactant intactId="EBI-12001016">
        <id>P07101-3</id>
    </interactant>
    <interactant intactId="EBI-11994018">
        <id>P0DJD3-2</id>
        <label>RBMY1A1</label>
    </interactant>
    <organismsDiffer>false</organismsDiffer>
    <experiments>3</experiments>
</comment>
<comment type="interaction">
    <interactant intactId="EBI-12001016">
        <id>P07101-3</id>
    </interactant>
    <interactant intactId="EBI-12001016">
        <id>P07101-3</id>
        <label>TH</label>
    </interactant>
    <organismsDiffer>false</organismsDiffer>
    <experiments>5</experiments>
</comment>
<comment type="interaction">
    <interactant intactId="EBI-12001016">
        <id>P07101-3</id>
    </interactant>
    <interactant intactId="EBI-308511">
        <id>Q9UJ04</id>
        <label>TSPYL4</label>
    </interactant>
    <organismsDiffer>false</organismsDiffer>
    <experiments>3</experiments>
</comment>
<comment type="interaction">
    <interactant intactId="EBI-12001016">
        <id>P07101-3</id>
    </interactant>
    <interactant intactId="EBI-10989060">
        <id>C9J7I0</id>
        <label>UMAD1</label>
    </interactant>
    <organismsDiffer>false</organismsDiffer>
    <experiments>3</experiments>
</comment>
<comment type="interaction">
    <interactant intactId="EBI-12001016">
        <id>P07101-3</id>
    </interactant>
    <interactant intactId="EBI-4395687">
        <id>Q5MCW4</id>
        <label>ZNF569</label>
    </interactant>
    <organismsDiffer>false</organismsDiffer>
    <experiments>3</experiments>
</comment>
<comment type="subcellular location">
    <subcellularLocation>
        <location evidence="2">Cytoplasm</location>
        <location evidence="2">Perinuclear region</location>
    </subcellularLocation>
    <subcellularLocation>
        <location evidence="1">Nucleus</location>
    </subcellularLocation>
    <subcellularLocation>
        <location evidence="2">Cell projection</location>
        <location evidence="2">Axon</location>
    </subcellularLocation>
    <subcellularLocation>
        <location evidence="1">Cytoplasm</location>
    </subcellularLocation>
    <subcellularLocation>
        <location evidence="1">Cytoplasmic vesicle</location>
        <location evidence="1">Secretory vesicle</location>
        <location evidence="1">Synaptic vesicle</location>
    </subcellularLocation>
    <text evidence="1">When phosphorylated at Ser-19 shows a nuclear distribution and when phosphorylated at Ser-31 as well at Ser-40 shows a cytosolic distribution (By similarity). Expressed in dopaminergic axons and axon terminals.</text>
</comment>
<comment type="alternative products">
    <event type="alternative splicing"/>
    <isoform>
        <id>P07101-1</id>
        <name>3</name>
        <name>TH type 4</name>
        <sequence type="displayed"/>
    </isoform>
    <isoform>
        <id>P07101-2</id>
        <name>1</name>
        <name>TH type 3</name>
        <sequence type="described" ref="VSP_000543"/>
    </isoform>
    <isoform>
        <id>P07101-3</id>
        <name>2</name>
        <name evidence="42">HTH-1</name>
        <name>hTH-Delta1b,2</name>
        <name>TH type 1</name>
        <sequence type="described" ref="VSP_000544"/>
    </isoform>
    <isoform>
        <id>P07101-4</id>
        <name>4</name>
        <name>hTH-Delta2</name>
        <name>TH type 2</name>
        <sequence type="described" ref="VSP_000541"/>
    </isoform>
    <isoform>
        <id>P07101-5</id>
        <name>5</name>
        <name evidence="41">hTH-Delta2,8,9</name>
        <sequence type="described" ref="VSP_000541 VSP_054338"/>
    </isoform>
    <isoform>
        <id>P07101-6</id>
        <name>6</name>
        <name evidence="41">hTH-Delta1b,2,8,9</name>
        <sequence type="described" ref="VSP_000544 VSP_054338"/>
    </isoform>
    <text>TH transcripts lacking exons 8 and 9 present concomitant splicing in exons 1b and 2.</text>
</comment>
<comment type="tissue specificity">
    <text>Mainly expressed in the brain and adrenal glands.</text>
</comment>
<comment type="PTM">
    <text evidence="1 8 28 29 33">Phosphorylated on Ser-19, Ser-62 and Ser-71 by several protein kinases with different site specificities. Phosphorylation at Ser-62 and Ser-71 leads to an increase of TH activity (PubMed:7901013). Phosphorylation at Ser-71 activates the enzyme and also counteracts the feedback inhibition of TH by catecholamines (PubMed:15287903). Phosphorylation of Ser-19 and Ser-62 triggers the proteasomal degradation of TH through the ubiquitin-proteasome pathway (By similarity). Phosphorylation at Ser-62 facilitates transport of TH from the soma to the nerve terminals via the microtubule network (PubMed:28637871). Phosphorylation at Ser-19 induces the high-affinity binding to the 14-3-3 protein YWHAG; this interaction may influence the phosphorylation and dephosphorylation of other sites (PubMed:24947669). Ser-19 increases the phosphorylation at Ser-71 in a hierarchical manner, leading to increased activity (By similarity).</text>
</comment>
<comment type="disease" evidence="5 6 7 10 11 12 15 16 17 18 19 20 22 23 24 25 26 27 32 34 35 36 37">
    <disease id="DI-00410">
        <name>Segawa syndrome autosomal recessive</name>
        <acronym>ARSEGS</acronym>
        <description>A form of DOPA-responsive dystonia presenting in infancy or early childhood. Dystonia is defined by the presence of sustained involuntary muscle contractions, often leading to abnormal postures. Some cases present with parkinsonian symptoms in infancy. Unlike all other forms of dystonia, it is an eminently treatable condition, due to a favorable response to L-DOPA.</description>
        <dbReference type="MIM" id="605407"/>
    </disease>
    <text>The disease is caused by variants affecting the gene represented in this entry.</text>
</comment>
<comment type="disease">
    <text evidence="21">May play a role in the pathogenesis of Parkinson disease (PD). A genome-wide copy number variation analysis has identified a 34 kilobase deletion over the TH gene in a PD patient but not in any controls.</text>
</comment>
<comment type="similarity">
    <text evidence="44">Belongs to the biopterin-dependent aromatic amino acid hydroxylase family.</text>
</comment>
<comment type="sequence caution" evidence="44">
    <conflict type="erroneous gene model prediction">
        <sequence resource="EMBL-CDS" id="AAA61173"/>
    </conflict>
</comment>
<comment type="online information" name="Wikipedia">
    <link uri="https://en.wikipedia.org/wiki/Tyrosine_hydroxylase"/>
    <text>Tyrosine hydroxylase entry</text>
</comment>
<reference key="1">
    <citation type="journal article" date="1987" name="Biochem. Biophys. Res. Commun.">
        <title>Isolation of a novel cDNA clone for human tyrosine hydroxylase: alternative RNA splicing produces four kinds of mRNA from a single gene.</title>
        <authorList>
            <person name="Kaneda N."/>
            <person name="Kobayashi K."/>
            <person name="Ichinose H."/>
            <person name="Kishi F."/>
            <person name="Nakazawa A."/>
            <person name="Kurosawa Y."/>
            <person name="Fujita K."/>
            <person name="Nagatsu T."/>
        </authorList>
    </citation>
    <scope>NUCLEOTIDE SEQUENCE [MRNA] (ISOFORM 3)</scope>
</reference>
<reference key="2">
    <citation type="journal article" date="1987" name="Nature">
        <title>A single human gene encoding multiple tyrosine hydroxylases with different predicted functional characteristics.</title>
        <authorList>
            <person name="Grima B."/>
            <person name="Lamouroux A."/>
            <person name="Boni C."/>
            <person name="Julien J.-F."/>
            <person name="Javoy-Agid F."/>
            <person name="Mallet J."/>
        </authorList>
    </citation>
    <scope>NUCLEOTIDE SEQUENCE [MRNA] (ISOFORM 2)</scope>
    <scope>ALTERNATIVE SPLICING</scope>
</reference>
<reference key="3">
    <citation type="journal article" date="1987" name="Nucleic Acids Res.">
        <title>Isolation of a full-length cDNA clone encoding human tyrosine hydroxylase type 3.</title>
        <authorList>
            <person name="Kobayashi K."/>
            <person name="Kaneda N."/>
            <person name="Ichinose H."/>
            <person name="Kishi F."/>
            <person name="Nakazawa A."/>
            <person name="Kurosawa Y."/>
            <person name="Fujita K."/>
            <person name="Nagatsu T."/>
        </authorList>
    </citation>
    <scope>NUCLEOTIDE SEQUENCE [MRNA] (ISOFORM 1)</scope>
</reference>
<reference key="4">
    <citation type="journal article" date="1988" name="J. Biochem.">
        <title>Structure of the human tyrosine hydroxylase gene: alternative splicing from a single gene accounts for generation of four mRNA types.</title>
        <authorList>
            <person name="Kobayashi K."/>
            <person name="Kaneda N."/>
            <person name="Ichinose H."/>
            <person name="Kishi F."/>
            <person name="Nakazawa A."/>
            <person name="Kurosawa Y."/>
            <person name="Fujita K."/>
            <person name="Nagatsu T."/>
        </authorList>
    </citation>
    <scope>NUCLEOTIDE SEQUENCE [GENOMIC DNA]</scope>
    <scope>ALTERNATIVE SPLICING</scope>
</reference>
<reference key="5">
    <citation type="journal article" date="2007" name="Biol. Chem.">
        <title>Characterisation of novel splicing variants of the tyrosine hydroxylase C-terminal domain in human neuroblastic tumours.</title>
        <authorList>
            <person name="Roma J."/>
            <person name="Saus E."/>
            <person name="Cuadros M."/>
            <person name="Reventos J."/>
            <person name="Sanchez de Toledo J."/>
            <person name="Gallego S."/>
        </authorList>
    </citation>
    <scope>NUCLEOTIDE SEQUENCE [MRNA] (ISOFORMS 5 AND 6)</scope>
    <scope>ALTERNATIVE SPLICING</scope>
    <scope>CATALYTIC ACTIVITY</scope>
    <scope>PATHWAY</scope>
</reference>
<reference key="6">
    <citation type="journal article" date="2006" name="Nature">
        <title>Human chromosome 11 DNA sequence and analysis including novel gene identification.</title>
        <authorList>
            <person name="Taylor T.D."/>
            <person name="Noguchi H."/>
            <person name="Totoki Y."/>
            <person name="Toyoda A."/>
            <person name="Kuroki Y."/>
            <person name="Dewar K."/>
            <person name="Lloyd C."/>
            <person name="Itoh T."/>
            <person name="Takeda T."/>
            <person name="Kim D.-W."/>
            <person name="She X."/>
            <person name="Barlow K.F."/>
            <person name="Bloom T."/>
            <person name="Bruford E."/>
            <person name="Chang J.L."/>
            <person name="Cuomo C.A."/>
            <person name="Eichler E."/>
            <person name="FitzGerald M.G."/>
            <person name="Jaffe D.B."/>
            <person name="LaButti K."/>
            <person name="Nicol R."/>
            <person name="Park H.-S."/>
            <person name="Seaman C."/>
            <person name="Sougnez C."/>
            <person name="Yang X."/>
            <person name="Zimmer A.R."/>
            <person name="Zody M.C."/>
            <person name="Birren B.W."/>
            <person name="Nusbaum C."/>
            <person name="Fujiyama A."/>
            <person name="Hattori M."/>
            <person name="Rogers J."/>
            <person name="Lander E.S."/>
            <person name="Sakaki Y."/>
        </authorList>
    </citation>
    <scope>NUCLEOTIDE SEQUENCE [LARGE SCALE GENOMIC DNA]</scope>
</reference>
<reference key="7">
    <citation type="submission" date="2005-07" db="EMBL/GenBank/DDBJ databases">
        <authorList>
            <person name="Mural R.J."/>
            <person name="Istrail S."/>
            <person name="Sutton G.G."/>
            <person name="Florea L."/>
            <person name="Halpern A.L."/>
            <person name="Mobarry C.M."/>
            <person name="Lippert R."/>
            <person name="Walenz B."/>
            <person name="Shatkay H."/>
            <person name="Dew I."/>
            <person name="Miller J.R."/>
            <person name="Flanigan M.J."/>
            <person name="Edwards N.J."/>
            <person name="Bolanos R."/>
            <person name="Fasulo D."/>
            <person name="Halldorsson B.V."/>
            <person name="Hannenhalli S."/>
            <person name="Turner R."/>
            <person name="Yooseph S."/>
            <person name="Lu F."/>
            <person name="Nusskern D.R."/>
            <person name="Shue B.C."/>
            <person name="Zheng X.H."/>
            <person name="Zhong F."/>
            <person name="Delcher A.L."/>
            <person name="Huson D.H."/>
            <person name="Kravitz S.A."/>
            <person name="Mouchard L."/>
            <person name="Reinert K."/>
            <person name="Remington K.A."/>
            <person name="Clark A.G."/>
            <person name="Waterman M.S."/>
            <person name="Eichler E.E."/>
            <person name="Adams M.D."/>
            <person name="Hunkapiller M.W."/>
            <person name="Myers E.W."/>
            <person name="Venter J.C."/>
        </authorList>
    </citation>
    <scope>NUCLEOTIDE SEQUENCE [LARGE SCALE GENOMIC DNA]</scope>
</reference>
<reference key="8">
    <citation type="journal article" date="2004" name="Genome Res.">
        <title>The status, quality, and expansion of the NIH full-length cDNA project: the Mammalian Gene Collection (MGC).</title>
        <authorList>
            <consortium name="The MGC Project Team"/>
        </authorList>
    </citation>
    <scope>NUCLEOTIDE SEQUENCE [LARGE SCALE MRNA] (ISOFORMS 2 AND 4)</scope>
    <scope>VARIANT MET-112</scope>
</reference>
<reference key="9">
    <citation type="journal article" date="1988" name="J. Neurochem.">
        <title>Analysis of the 5' region of the human tyrosine hydroxylase gene: combinatorial patterns of exon splicing generate multiple regulated tyrosine hydroxylase isoforms.</title>
        <authorList>
            <person name="le Bourdelles B."/>
            <person name="Boularand S."/>
            <person name="Boni C."/>
            <person name="Horellou P."/>
            <person name="Dumas S."/>
            <person name="Grima B."/>
            <person name="Mallet J."/>
        </authorList>
    </citation>
    <scope>PARTIAL NUCLEOTIDE SEQUENCE [GENOMIC DNA]</scope>
</reference>
<reference key="10">
    <citation type="journal article" date="1988" name="J. Biol. Chem.">
        <title>Expression of human tyrosine hydroxylase cDNA in invertebrate cells using a baculovirus vector.</title>
        <authorList>
            <person name="Ginns E.I."/>
            <person name="Rehavi M."/>
            <person name="Martin B.M."/>
            <person name="Weller M."/>
            <person name="O'Malley K.L."/>
            <person name="Lamarca M.E."/>
            <person name="McAllister C.G."/>
            <person name="Paul S.M."/>
        </authorList>
    </citation>
    <scope>NUCLEOTIDE SEQUENCE [MRNA] OF 1-30</scope>
</reference>
<reference key="11">
    <citation type="journal article" date="1991" name="J. Biol. Chem.">
        <title>Phosphorylation of human recombinant tyrosine hydroxylase isoforms 1 and 2: an additional phosphorylated residue in isoform 2, generated through alternative splicing.</title>
        <authorList>
            <person name="Le Bourdelles B."/>
            <person name="Horellou P."/>
            <person name="Le Caer J.P."/>
            <person name="Denefle P."/>
            <person name="Latta M."/>
            <person name="Haavik J."/>
            <person name="Guibert B."/>
            <person name="Mayaux J.F."/>
            <person name="Mallet J."/>
        </authorList>
    </citation>
    <scope>CATALYTIC ACTIVITY</scope>
    <scope>FUNCTION</scope>
    <scope>ACTIVITY REGULATION</scope>
    <scope>PHOSPHORYLATION AT SER-19 AND SER-71</scope>
</reference>
<reference key="12">
    <citation type="journal article" date="1993" name="Eur. J. Biochem.">
        <title>Phosphorylation and activation of human tyrosine hydroxylase in vitro by mitogen-activated protein (MAP) kinase and MAP-kinase-activated kinases 1 and 2.</title>
        <authorList>
            <person name="Sutherland C."/>
            <person name="Alterio J."/>
            <person name="Campbell D.G."/>
            <person name="Le Bourdelles B."/>
            <person name="Mallet J."/>
            <person name="Haavik J."/>
            <person name="Cohen P."/>
        </authorList>
    </citation>
    <scope>FUNCTION</scope>
    <scope>CATALYTIC ACTIVITY</scope>
    <scope>ACTIVITY REGULATION</scope>
    <scope>PHOSPHORYLATION AT SER-62 AND SER-71</scope>
</reference>
<reference key="13">
    <citation type="journal article" date="2004" name="J. Neurochem.">
        <title>Effects of phosphorylation by protein kinase A on binding of catecholamines to the human tyrosine hydroxylase isoforms.</title>
        <authorList>
            <person name="Sura G.R."/>
            <person name="Daubner S.C."/>
            <person name="Fitzpatrick P.F."/>
        </authorList>
    </citation>
    <scope>ACTIVITY REGULATION</scope>
    <scope>FUNCTION</scope>
    <scope>CATALYTIC ACTIVITY</scope>
</reference>
<reference key="14">
    <citation type="journal article" date="2010" name="Hum. Mutat.">
        <title>A rare novel deletion of the tyrosine hydroxylase gene in Parkinson disease.</title>
        <authorList>
            <person name="Bademci G."/>
            <person name="Edwards T.L."/>
            <person name="Torres A.L."/>
            <person name="Scott W.K."/>
            <person name="Zuchner S."/>
            <person name="Martin E.R."/>
            <person name="Vance J.M."/>
            <person name="Wang L."/>
        </authorList>
    </citation>
    <scope>POSSIBLE INVOLVEMENT IN PARKINSON DISEASE</scope>
</reference>
<reference key="15">
    <citation type="journal article" date="1995" name="Hum. Genet.">
        <title>A point mutation in the tyrosine hydroxylase gene associated with Segawa's syndrome.</title>
        <authorList>
            <person name="Luedecke B."/>
            <person name="Dworniczak B."/>
            <person name="Bartholome K."/>
        </authorList>
    </citation>
    <scope>INVOLVEMENT IN ARSEGS</scope>
    <scope>VARIANT ARSEGS LYS-412</scope>
</reference>
<reference key="16">
    <citation type="journal article" date="1995" name="Hum. Genet.">
        <title>Frequent sequence variant in the human tyrosine hydroxylase gene.</title>
        <authorList>
            <person name="Luedecke B."/>
            <person name="Bartholome K."/>
        </authorList>
    </citation>
    <scope>VARIANT MET-112</scope>
</reference>
<reference key="17">
    <citation type="journal article" date="1995" name="Hum. Mol. Genet.">
        <title>Recessively inherited L-DOPA-responsive dystonia caused by a point mutation (Q381K) in the tyrosine hydroxylase gene.</title>
        <authorList>
            <person name="Knappskog P.M."/>
            <person name="Flatmark T."/>
            <person name="Mallet J."/>
            <person name="Luedecke B."/>
            <person name="Bartholome K."/>
        </authorList>
    </citation>
    <scope>FUNCTION</scope>
    <scope>CATALYTIC ACTIVITY</scope>
    <scope>CHARACTERIZATION OF VARIANT ARSEGS LYS-412</scope>
</reference>
<reference evidence="47" key="18">
    <citation type="submission" date="2010-10" db="PDB data bank">
        <title>Crystal Structure of Human Tyrosine Hydroxylase Catalytic Domain.</title>
        <authorList>
            <person name="Muniz J.R.C."/>
            <person name="Cooper C.D.O."/>
            <person name="Yue W.W."/>
            <person name="Krysztofinska E."/>
            <person name="von Delft F."/>
            <person name="Knapp S."/>
            <person name="Gileadi O."/>
            <person name="Arrowsmith C.H."/>
            <person name="Edwards A.M."/>
            <person name="Weigelt J."/>
            <person name="Bountra C."/>
            <person name="Kavanagh K.L."/>
            <person name="Oppermann U."/>
        </authorList>
    </citation>
    <scope>X-RAY CRYSTALLOGRAPHY (2.68 ANGSTROMS) OF 193-528</scope>
    <scope>SUBUNIT</scope>
</reference>
<reference key="19">
    <citation type="journal article" date="2014" name="Mol. Cell. Proteomics">
        <title>Phosphorylation dependence and stoichiometry of the complex formed by tyrosine hydroxylase and 14-3-3gamma.</title>
        <authorList>
            <person name="Kleppe R."/>
            <person name="Rosati S."/>
            <person name="Jorge-Finnigan A."/>
            <person name="Alvira S."/>
            <person name="Ghorbani S."/>
            <person name="Haavik J."/>
            <person name="Valpuesta J.M."/>
            <person name="Heck A.J."/>
            <person name="Martinez A."/>
        </authorList>
    </citation>
    <scope>IDENTIFICATION BY MASS SPECTROMETRY</scope>
    <scope>PHOSPHORYLATION AT SER-19 AND SER-62</scope>
    <scope>INTERACTION WITH YWHAG</scope>
    <scope>SUBUNIT</scope>
</reference>
<reference key="20">
    <citation type="journal article" date="2017" name="J. Biol. Chem.">
        <title>Phosphorylation at serine 31 targets tyrosine hydroxylase to vesicles for transport along microtubules.</title>
        <authorList>
            <person name="Jorge-Finnigan A."/>
            <person name="Kleppe R."/>
            <person name="Jung-Kc K."/>
            <person name="Ying M."/>
            <person name="Marie M."/>
            <person name="Rios-Mondragon I."/>
            <person name="Salvatore M.F."/>
            <person name="Saraste J."/>
            <person name="Martinez A."/>
        </authorList>
    </citation>
    <scope>PHOSPHORYLATION AT SER-62</scope>
    <scope>SUBCELLULAR LOCATION</scope>
    <scope>MUTAGENESIS OF SER-62</scope>
</reference>
<reference key="21">
    <citation type="journal article" date="2022" name="Biochem. Biophys. Res. Commun.">
        <title>Tyrosine hydroxylase activity is regulated through the modification of the 176th cysteine residue.</title>
        <authorList>
            <person name="Inukai S."/>
            <person name="Hara S."/>
            <person name="Ichinose H."/>
        </authorList>
    </citation>
    <scope>FUNCTION</scope>
    <scope>CATALYTIC ACTIVITY</scope>
    <scope>ACTIVITY REGULATION</scope>
    <scope>MUTAGENESIS OF SER-71 AND CYS-207</scope>
    <scope>BIOPHYSICOCHEMICAL PROPERTIES</scope>
</reference>
<reference key="22">
    <citation type="journal article" date="1996" name="Hum. Mol. Genet.">
        <title>Recessively inherited L-DOPA-responsive parkinsonism in infancy caused by a point mutation (L205P) in the tyrosine hydroxylase gene.</title>
        <authorList>
            <person name="Luedecke B."/>
            <person name="Knappskog P.M."/>
            <person name="Clayton P.T."/>
            <person name="Surtees R.A.H."/>
            <person name="Clelland J.D."/>
            <person name="Heales S.J.R."/>
            <person name="Brand M.P."/>
            <person name="Bartholome K."/>
            <person name="Flatmark T."/>
        </authorList>
    </citation>
    <scope>CHARACTERIZATION OF VARIANT ARSEGS PRO-236</scope>
</reference>
<reference key="23">
    <citation type="journal article" date="1998" name="Am. J. Med. Genet.">
        <title>Association study of structural mutations of the tyrosine hydroxylase gene with schizophrenia and Parkinson's disease.</title>
        <authorList>
            <person name="Kunugi H."/>
            <person name="Kawada Y."/>
            <person name="Hattori M."/>
            <person name="Ueki A."/>
            <person name="Otsuka M."/>
            <person name="Nanko S."/>
        </authorList>
    </citation>
    <scope>VARIANT ARSEGS PRO-236</scope>
    <scope>VARIANT MET-112</scope>
</reference>
<reference key="24">
    <citation type="journal article" date="1998" name="Am. J. Med. Genet.">
        <title>Systematic search for variations in the tyrosine hydroxylase gene and their associations with schizophrenia, affective disorders, and alcoholism.</title>
        <authorList>
            <person name="Ishiguro H."/>
            <person name="Arinami T."/>
            <person name="Saito T."/>
            <person name="Akazawa S."/>
            <person name="Enomoto M."/>
            <person name="Mitushio H."/>
            <person name="Fujishiro H."/>
            <person name="Tada K."/>
            <person name="Akimoto Y."/>
            <person name="Mifune H."/>
            <person name="Shiozuka S."/>
            <person name="Hamaguchi H."/>
            <person name="Toru M."/>
            <person name="Shibuya H."/>
        </authorList>
    </citation>
    <scope>VARIANT MET-499</scope>
</reference>
<reference key="25">
    <citation type="journal article" date="1998" name="Hum. Genet.">
        <title>A common point mutation in the tyrosine hydroxylase gene in autosomal recessive L-DOPA-responsive dystonia in the Dutch population.</title>
        <authorList>
            <person name="van den Heuvel L.P.W.J."/>
            <person name="Luiten B."/>
            <person name="Smeitink J.A.M."/>
            <person name="de Rijk-van Andel J.F."/>
            <person name="Hyland K."/>
            <person name="Steenbergen-Spanjers G.C.H."/>
            <person name="Janssen R.J.T."/>
            <person name="Wevers R.A."/>
        </authorList>
    </citation>
    <scope>VARIANT ARSEGS HIS-233</scope>
</reference>
<reference key="26">
    <citation type="journal article" date="1999" name="Clin. Chem.">
        <title>Biochemical and molecular genetic characteristics of the severe form of tyrosine hydroxylase deficiency.</title>
        <authorList>
            <person name="Braeutigam C."/>
            <person name="Steenbergen-Spanjers G.C."/>
            <person name="Hoffmann G.F."/>
            <person name="Dionisi-Vici C."/>
            <person name="van den Heuvel L.P."/>
            <person name="Smeitink J.A."/>
            <person name="Wevers R.A."/>
        </authorList>
    </citation>
    <scope>VARIANT ARSEGS PHE-359</scope>
</reference>
<reference key="27">
    <citation type="journal article" date="1999" name="Nat. Genet.">
        <title>Characterization of single-nucleotide polymorphisms in coding regions of human genes.</title>
        <authorList>
            <person name="Cargill M."/>
            <person name="Altshuler D."/>
            <person name="Ireland J."/>
            <person name="Sklar P."/>
            <person name="Ardlie K."/>
            <person name="Patil N."/>
            <person name="Shaw N."/>
            <person name="Lane C.R."/>
            <person name="Lim E.P."/>
            <person name="Kalyanaraman N."/>
            <person name="Nemesh J."/>
            <person name="Ziaugra L."/>
            <person name="Friedland L."/>
            <person name="Rolfe A."/>
            <person name="Warrington J."/>
            <person name="Lipshutz R."/>
            <person name="Daley G.Q."/>
            <person name="Lander E.S."/>
        </authorList>
    </citation>
    <scope>VARIANT MET-112</scope>
</reference>
<reference key="28">
    <citation type="journal article" date="1999" name="Nat. Genet.">
        <authorList>
            <person name="Cargill M."/>
            <person name="Altshuler D."/>
            <person name="Ireland J."/>
            <person name="Sklar P."/>
            <person name="Ardlie K."/>
            <person name="Patil N."/>
            <person name="Shaw N."/>
            <person name="Lane C.R."/>
            <person name="Lim E.P."/>
            <person name="Kalyanaraman N."/>
            <person name="Nemesh J."/>
            <person name="Ziaugra L."/>
            <person name="Friedland L."/>
            <person name="Rolfe A."/>
            <person name="Warrington J."/>
            <person name="Lipshutz R."/>
            <person name="Daley G.Q."/>
            <person name="Lander E.S."/>
        </authorList>
    </citation>
    <scope>ERRATUM OF PUBMED:10391209</scope>
</reference>
<reference key="29">
    <citation type="journal article" date="2000" name="Ann. Hum. Genet.">
        <title>Four novel mutations in the tyrosine hydroxylase gene in patients with infantile parkinsonism.</title>
        <authorList>
            <person name="Swaans R.J.M."/>
            <person name="Rondot P."/>
            <person name="Renier W.O."/>
            <person name="Van Den Heuvel L.P.W.J."/>
            <person name="Steenbergen-Spanjers G.C.H."/>
            <person name="Wevers R.A."/>
        </authorList>
    </citation>
    <scope>VARIANTS ARSEGS PRO-276; MET-314; HIS-337 AND MET-494</scope>
</reference>
<reference key="30">
    <citation type="journal article" date="2000" name="J. Inherit. Metab. Dis.">
        <title>Tyrosine hydroxylase deficiency unresponsive to L-dopa treatment with unusual clinical and biochemical presentation.</title>
        <authorList>
            <person name="De Lonlay P."/>
            <person name="Nassogne M.C."/>
            <person name="van Gennip A.H."/>
            <person name="van Cruchten A.C."/>
            <person name="Billatte de Villemeur T."/>
            <person name="Cretz M."/>
            <person name="Stoll C."/>
            <person name="Launay J.M."/>
            <person name="Steenberger-Spante G.C."/>
            <person name="van den Heuvel L.P."/>
            <person name="Wevers R.A."/>
            <person name="Saudubray J.M."/>
            <person name="Abeling N.G."/>
        </authorList>
    </citation>
    <scope>VARIANT ARSEGS SER-309</scope>
</reference>
<reference key="31">
    <citation type="journal article" date="2004" name="Neurology">
        <title>Long-term course of L-dopa-responsive dystonia caused by tyrosine hydroxylase deficiency.</title>
        <authorList>
            <person name="Schiller A."/>
            <person name="Wevers R.A."/>
            <person name="Steenbergen G.C."/>
            <person name="Blau N."/>
            <person name="Jung H.H."/>
        </authorList>
    </citation>
    <scope>VARIANTS ARSEGS VAL-376 AND GLY-498</scope>
</reference>
<reference key="32">
    <citation type="journal article" date="2005" name="Mov. Disord.">
        <title>Levodopa-responsive infantile parkinsonism due to a novel mutation in the tyrosine hydroxylase gene and exacerbation by viral infections.</title>
        <authorList>
            <person name="Diepold K."/>
            <person name="Schuetz B."/>
            <person name="Rostasy K."/>
            <person name="Wilken B."/>
            <person name="Hougaard P."/>
            <person name="Guettler F."/>
            <person name="Romstad A."/>
            <person name="Birk Moeller L."/>
        </authorList>
    </citation>
    <scope>VARIANTS ARSEGS TYR-246 AND GLY-498</scope>
</reference>
<reference key="33">
    <citation type="journal article" date="2005" name="Prenat. Diagn.">
        <title>Pre- and postnatal diagnosis of tyrosine hydroxylase deficiency.</title>
        <authorList>
            <person name="Moeller L.B."/>
            <person name="Romstad A."/>
            <person name="Paulsen M."/>
            <person name="Hougaard P."/>
            <person name="Ormazabal A."/>
            <person name="Pineda M."/>
            <person name="Blau N."/>
            <person name="Guettler F."/>
            <person name="Artuch R."/>
        </authorList>
    </citation>
    <scope>VARIANTS ARSEGS TRP-328 AND MET-399</scope>
</reference>
<reference key="34">
    <citation type="journal article" date="2007" name="Ann. Neurol.">
        <title>Mutations in the cyclic adenosine monophosphate response element of the tyrosine hydroxylase gene.</title>
        <authorList>
            <person name="Verbeek M.M."/>
            <person name="Steenbergen-Spanjers G.C."/>
            <person name="Willemsen M.A."/>
            <person name="Hol F.A."/>
            <person name="Smeitink J."/>
            <person name="Seeger J."/>
            <person name="Grattan-Smith P."/>
            <person name="Ryan M.M."/>
            <person name="Hoffmann G.F."/>
            <person name="Donati M.A."/>
            <person name="Blau N."/>
            <person name="Wevers R.A."/>
        </authorList>
    </citation>
    <scope>VARIANTS ARSEGS MET-387 AND LEU-492</scope>
</reference>
<reference key="35">
    <citation type="journal article" date="2007" name="Neuropediatrics">
        <title>Tyrosine hydroxylase deficiency presenting with a biphasic clinical course.</title>
        <authorList>
            <person name="Giovanniello T."/>
            <person name="Leuzzi V."/>
            <person name="Carducci C."/>
            <person name="Carducci C."/>
            <person name="Sabato M.L."/>
            <person name="Artiola C."/>
            <person name="Santagata S."/>
            <person name="Pozzessere S."/>
            <person name="Antonozzi I."/>
        </authorList>
    </citation>
    <scope>VARIANTS ARSEGS ARG-414 AND GLN-510</scope>
</reference>
<reference key="36">
    <citation type="journal article" date="2008" name="Clin. Genet.">
        <title>Molecular analyses of GCH-1, TH and parkin genes in Chinese dopa-responsive dystonia families.</title>
        <authorList>
            <person name="Wu Z.Y."/>
            <person name="Lin Y."/>
            <person name="Chen W.J."/>
            <person name="Zhao G.X."/>
            <person name="Xie H."/>
            <person name="Murong S.X."/>
            <person name="Wang N."/>
        </authorList>
    </citation>
    <scope>VARIANTS ARSEGS HIS-233 AND SER-247</scope>
</reference>
<reference key="37">
    <citation type="journal article" date="2009" name="Brain">
        <title>Exhaustive analysis of BH4 and dopamine biosynthesis genes in patients with Dopa-responsive dystonia.</title>
        <authorList>
            <person name="Clot F."/>
            <person name="Grabli D."/>
            <person name="Cazeneuve C."/>
            <person name="Roze E."/>
            <person name="Castelnau P."/>
            <person name="Chabrol B."/>
            <person name="Landrieu P."/>
            <person name="Nguyen K."/>
            <person name="Ponsot G."/>
            <person name="Abada M."/>
            <person name="Doummar D."/>
            <person name="Damier P."/>
            <person name="Gil R."/>
            <person name="Thobois S."/>
            <person name="Ward A.J."/>
            <person name="Hutchinson M."/>
            <person name="Toutain A."/>
            <person name="Picard F."/>
            <person name="Camuzat A."/>
            <person name="Fedirko E."/>
            <person name="San C."/>
            <person name="Bouteiller D."/>
            <person name="LeGuern E."/>
            <person name="Durr A."/>
            <person name="Vidailhet M."/>
            <person name="Brice A."/>
        </authorList>
    </citation>
    <scope>VARIANTS ARSEGS ALA-301; PRO-319; LEU-375; ARG-414 AND GLY-467</scope>
</reference>
<reference key="38">
    <citation type="journal article" date="2010" name="Brain">
        <title>Tyrosine hydroxylase deficiency: a treatable disorder of brain catecholamine biosynthesis.</title>
        <authorList>
            <person name="Willemsen M.A."/>
            <person name="Verbeek M.M."/>
            <person name="Kamsteeg E.J."/>
            <person name="de Rijk-van Andel J.F."/>
            <person name="Aeby A."/>
            <person name="Blau N."/>
            <person name="Burlina A."/>
            <person name="Donati M.A."/>
            <person name="Geurtz B."/>
            <person name="Grattan-Smith P.J."/>
            <person name="Haeussler M."/>
            <person name="Hoffmann G.F."/>
            <person name="Jung H."/>
            <person name="de Klerk J.B."/>
            <person name="van der Knaap M.S."/>
            <person name="Kok F."/>
            <person name="Leuzzi V."/>
            <person name="de Lonlay P."/>
            <person name="Megarbane A."/>
            <person name="Monaghan H."/>
            <person name="Renier W.O."/>
            <person name="Rondot P."/>
            <person name="Ryan M.M."/>
            <person name="Seeger J."/>
            <person name="Smeitink J.A."/>
            <person name="Steenbergen-Spanjers G.C."/>
            <person name="Wassmer E."/>
            <person name="Weschke B."/>
            <person name="Wijburg F.A."/>
            <person name="Wilcken B."/>
            <person name="Zafeiriou D.I."/>
            <person name="Wevers R.A."/>
        </authorList>
    </citation>
    <scope>VARIANTS ARSEGS TYR-207; GLY-227; THR-241; GLY-259 AND THR-394</scope>
</reference>
<reference key="39">
    <citation type="journal article" date="2010" name="Mol. Genet. Metab.">
        <title>Biochemical and molecular characterization of tyrosine hydroxylase deficiency in Hong Kong Chinese.</title>
        <authorList>
            <person name="Mak C.M."/>
            <person name="Lam C.W."/>
            <person name="Siu T.S."/>
            <person name="Chan K.Y."/>
            <person name="Siu W.K."/>
            <person name="Yeung W.L."/>
            <person name="Hui J."/>
            <person name="Wong V.C."/>
            <person name="Low L.C."/>
            <person name="Ko C.H."/>
            <person name="Fung C.W."/>
            <person name="Chen S.P."/>
            <person name="Yuen Y.P."/>
            <person name="Lee H.C."/>
            <person name="Yau E."/>
            <person name="Chan B."/>
            <person name="Tong S.F."/>
            <person name="Tam S."/>
            <person name="Chan Y.W."/>
        </authorList>
    </citation>
    <scope>VARIANTS ARSEGS ARG-294; SER-315; VAL-385; THR-394 AND ARG-408</scope>
</reference>
<reference key="40">
    <citation type="journal article" date="2011" name="J. Parkinson's Dis.">
        <title>A novel compound heterozygous tyrosine hydroxylase mutation (p.R441P) with complex phenotype.</title>
        <authorList>
            <person name="Haugarvoll K."/>
            <person name="Bindoff L.A."/>
        </authorList>
    </citation>
    <scope>VARIANTS ARSEGS PRO-441 AND GLY-498</scope>
</reference>
<reference key="41">
    <citation type="journal article" date="2012" name="J. Child Neurol.">
        <title>A new tyrosine hydroxylase genotype associated with early-onset severe encephalopathy.</title>
        <authorList>
            <person name="Giovanniello T."/>
            <person name="Claps D."/>
            <person name="Carducci C."/>
            <person name="Carducci C."/>
            <person name="Blau N."/>
            <person name="Vigevano F."/>
            <person name="Antonozzi I."/>
            <person name="Leuzzi V."/>
        </authorList>
    </citation>
    <scope>VARIANTS ARSEGS LEU-251; PHE-279 AND GLN-296</scope>
    <scope>VARIANT MET-112</scope>
</reference>
<reference key="42">
    <citation type="journal article" date="2012" name="Neurology">
        <title>Myoclonus-dystonia syndrome due to tyrosine hydroxylase deficiency.</title>
        <authorList>
            <person name="Stamelou M."/>
            <person name="Mencacci N.E."/>
            <person name="Cordivari C."/>
            <person name="Batla A."/>
            <person name="Wood N.W."/>
            <person name="Houlden H."/>
            <person name="Hardy J."/>
            <person name="Bhatia K.P."/>
        </authorList>
    </citation>
    <scope>VARIANT ARSEGS ARG-428</scope>
</reference>
<reference key="43">
    <citation type="journal article" date="2012" name="Pediatr. Neurol.">
        <title>Tyrosine hydroxylase deficiency in Taiwanese infants.</title>
        <authorList>
            <person name="Chi C.S."/>
            <person name="Lee H.F."/>
            <person name="Tsai C.R."/>
        </authorList>
    </citation>
    <scope>VARIANTS ARSEGS HIS-233; SER-315 AND THR-382</scope>
</reference>
<reference key="44">
    <citation type="journal article" date="2013" name="PLoS ONE">
        <title>GTP cyclohydrolase I and tyrosine hydroxylase gene mutations in familial and sporadic dopa-responsive dystonia patients.</title>
        <authorList>
            <person name="Cai C."/>
            <person name="Shi W."/>
            <person name="Zeng Z."/>
            <person name="Zhang M."/>
            <person name="Ling C."/>
            <person name="Chen L."/>
            <person name="Cai C."/>
            <person name="Zhang B."/>
            <person name="Li W.D."/>
        </authorList>
    </citation>
    <scope>VARIANTS CYS-19 AND ARG-428</scope>
</reference>
<reference key="45">
    <citation type="journal article" date="2014" name="Hum. Mutat.">
        <title>Functional studies of tyrosine hydroxylase missense variants reveal distinct patterns of molecular defects in Dopa-responsive dystonia.</title>
        <authorList>
            <person name="Fossbakk A."/>
            <person name="Kleppe R."/>
            <person name="Knappskog P.M."/>
            <person name="Martinez A."/>
            <person name="Haavik J."/>
        </authorList>
    </citation>
    <scope>FUNCTION</scope>
    <scope>CATALYTIC ACTIVITY</scope>
    <scope>BIOPHYSICOCHEMICAL PROPERTIES</scope>
    <scope>CHARACTERIZATION OF VARIANTS ARSEGS TYR-207; GLY-227; HIS-233; PRO-236; THR-241; TYR-246; SER-247; GLY-259; PRO-276; ALA-301; SER-309; MET-314; PRO-319; TRP-328; HIS-337; PHE-359; LEU-375; VAL-376; MET-387; THR-394; MET-399; LYS-412; ARG-414; PRO-441; GLY-467; LEU-492; MET-494; GLY-498 AND GLN-510</scope>
</reference>
<gene>
    <name evidence="46" type="primary">TH</name>
    <name type="synonym">TYH</name>
</gene>
<dbReference type="EC" id="1.14.16.2" evidence="8 13 14 27 30 34 39"/>
<dbReference type="EMBL" id="M17589">
    <property type="protein sequence ID" value="AAA61179.1"/>
    <property type="molecule type" value="mRNA"/>
</dbReference>
<dbReference type="EMBL" id="X05290">
    <property type="protein sequence ID" value="CAA28908.1"/>
    <property type="molecule type" value="mRNA"/>
</dbReference>
<dbReference type="EMBL" id="Y00414">
    <property type="protein sequence ID" value="CAA68472.1"/>
    <property type="molecule type" value="mRNA"/>
</dbReference>
<dbReference type="EMBL" id="DQ677336">
    <property type="protein sequence ID" value="ABG73364.1"/>
    <property type="molecule type" value="mRNA"/>
</dbReference>
<dbReference type="EMBL" id="DQ677337">
    <property type="protein sequence ID" value="ABG73365.1"/>
    <property type="molecule type" value="mRNA"/>
</dbReference>
<dbReference type="EMBL" id="AC132217">
    <property type="status" value="NOT_ANNOTATED_CDS"/>
    <property type="molecule type" value="Genomic_DNA"/>
</dbReference>
<dbReference type="EMBL" id="M24791">
    <property type="protein sequence ID" value="AAA61173.1"/>
    <property type="status" value="ALT_SEQ"/>
    <property type="molecule type" value="Genomic_DNA"/>
</dbReference>
<dbReference type="EMBL" id="M24787">
    <property type="protein sequence ID" value="AAA61173.1"/>
    <property type="status" value="JOINED"/>
    <property type="molecule type" value="Genomic_DNA"/>
</dbReference>
<dbReference type="EMBL" id="M24789">
    <property type="protein sequence ID" value="AAA61173.1"/>
    <property type="status" value="JOINED"/>
    <property type="molecule type" value="Genomic_DNA"/>
</dbReference>
<dbReference type="EMBL" id="CH471158">
    <property type="protein sequence ID" value="EAX02493.1"/>
    <property type="molecule type" value="Genomic_DNA"/>
</dbReference>
<dbReference type="EMBL" id="BC104967">
    <property type="protein sequence ID" value="AAI04968.1"/>
    <property type="molecule type" value="mRNA"/>
</dbReference>
<dbReference type="EMBL" id="BC143611">
    <property type="protein sequence ID" value="AAI43612.1"/>
    <property type="molecule type" value="mRNA"/>
</dbReference>
<dbReference type="EMBL" id="BC143614">
    <property type="protein sequence ID" value="AAI43615.1"/>
    <property type="molecule type" value="mRNA"/>
</dbReference>
<dbReference type="EMBL" id="M24791">
    <property type="protein sequence ID" value="AAA61170.1"/>
    <property type="molecule type" value="Genomic_DNA"/>
</dbReference>
<dbReference type="EMBL" id="M24787">
    <property type="protein sequence ID" value="AAA61170.1"/>
    <property type="status" value="JOINED"/>
    <property type="molecule type" value="Genomic_DNA"/>
</dbReference>
<dbReference type="EMBL" id="M20911">
    <property type="protein sequence ID" value="AAA61167.1"/>
    <property type="molecule type" value="mRNA"/>
</dbReference>
<dbReference type="CCDS" id="CCDS31338.1">
    <molecule id="P07101-2"/>
</dbReference>
<dbReference type="CCDS" id="CCDS7730.1">
    <molecule id="P07101-3"/>
</dbReference>
<dbReference type="CCDS" id="CCDS7731.1">
    <molecule id="P07101-1"/>
</dbReference>
<dbReference type="PIR" id="A30002">
    <property type="entry name" value="WHHUY4"/>
</dbReference>
<dbReference type="RefSeq" id="NP_000351.2">
    <molecule id="P07101-3"/>
    <property type="nucleotide sequence ID" value="NM_000360.4"/>
</dbReference>
<dbReference type="RefSeq" id="NP_954986.2">
    <molecule id="P07101-1"/>
    <property type="nucleotide sequence ID" value="NM_199292.3"/>
</dbReference>
<dbReference type="RefSeq" id="NP_954987.2">
    <molecule id="P07101-2"/>
    <property type="nucleotide sequence ID" value="NM_199293.3"/>
</dbReference>
<dbReference type="RefSeq" id="XP_011518637.1">
    <molecule id="P07101-4"/>
    <property type="nucleotide sequence ID" value="XM_011520335.3"/>
</dbReference>
<dbReference type="RefSeq" id="XP_054225745.1">
    <molecule id="P07101-4"/>
    <property type="nucleotide sequence ID" value="XM_054369770.1"/>
</dbReference>
<dbReference type="PDB" id="2XSN">
    <property type="method" value="X-ray"/>
    <property type="resolution" value="2.68 A"/>
    <property type="chains" value="A/B/C/D=193-528"/>
</dbReference>
<dbReference type="PDB" id="4J6S">
    <property type="method" value="X-ray"/>
    <property type="resolution" value="3.08 A"/>
    <property type="chains" value="E/F/G/H=1-74"/>
</dbReference>
<dbReference type="PDB" id="6ZN2">
    <property type="method" value="EM"/>
    <property type="resolution" value="4.30 A"/>
    <property type="chains" value="A/C/E/G=194-528"/>
</dbReference>
<dbReference type="PDB" id="6ZVP">
    <property type="method" value="EM"/>
    <property type="resolution" value="4.00 A"/>
    <property type="chains" value="A/B/C/D=71-528"/>
</dbReference>
<dbReference type="PDB" id="6ZZU">
    <property type="method" value="EM"/>
    <property type="resolution" value="3.50 A"/>
    <property type="chains" value="A/B/C/D=194-528"/>
</dbReference>
<dbReference type="PDB" id="7A2G">
    <property type="method" value="EM"/>
    <property type="resolution" value="4.10 A"/>
    <property type="chains" value="A/B/C/D=109-528"/>
</dbReference>
<dbReference type="PDB" id="7PIM">
    <property type="method" value="EM"/>
    <property type="resolution" value="4.60 A"/>
    <property type="chains" value="A/B/D/F=194-528"/>
</dbReference>
<dbReference type="PDBsum" id="2XSN"/>
<dbReference type="PDBsum" id="4J6S"/>
<dbReference type="PDBsum" id="6ZN2"/>
<dbReference type="PDBsum" id="6ZVP"/>
<dbReference type="PDBsum" id="6ZZU"/>
<dbReference type="PDBsum" id="7A2G"/>
<dbReference type="PDBsum" id="7PIM"/>
<dbReference type="EMDB" id="EMD-11309"/>
<dbReference type="EMDB" id="EMD-11467"/>
<dbReference type="EMDB" id="EMD-11587"/>
<dbReference type="EMDB" id="EMD-11624"/>
<dbReference type="EMDB" id="EMD-13442"/>
<dbReference type="EMDB" id="EMD-18047"/>
<dbReference type="EMDB" id="EMD-18058"/>
<dbReference type="EMDB" id="EMD-18289"/>
<dbReference type="SASBDB" id="P07101"/>
<dbReference type="SMR" id="P07101"/>
<dbReference type="BioGRID" id="112912">
    <property type="interactions" value="40"/>
</dbReference>
<dbReference type="ELM" id="P07101"/>
<dbReference type="FunCoup" id="P07101">
    <property type="interactions" value="286"/>
</dbReference>
<dbReference type="IntAct" id="P07101">
    <property type="interactions" value="23"/>
</dbReference>
<dbReference type="MINT" id="P07101"/>
<dbReference type="STRING" id="9606.ENSP00000370571"/>
<dbReference type="BindingDB" id="P07101"/>
<dbReference type="ChEMBL" id="CHEMBL1969"/>
<dbReference type="DrugBank" id="DB01758">
    <property type="generic name" value="3-Iodo-Tyrosine"/>
</dbReference>
<dbReference type="DrugBank" id="DB03552">
    <property type="generic name" value="3-Tyrosine"/>
</dbReference>
<dbReference type="DrugBank" id="DB04400">
    <property type="generic name" value="L-erythro-7,8-dihydrobiopterin"/>
</dbReference>
<dbReference type="DrugBank" id="DB00765">
    <property type="generic name" value="Metyrosine"/>
</dbReference>
<dbReference type="DrugBank" id="DB00120">
    <property type="generic name" value="Phenylalanine"/>
</dbReference>
<dbReference type="DrugBank" id="DB00360">
    <property type="generic name" value="Sapropterin"/>
</dbReference>
<dbReference type="DrugBank" id="DB00135">
    <property type="generic name" value="Tyrosine"/>
</dbReference>
<dbReference type="DrugCentral" id="P07101"/>
<dbReference type="iPTMnet" id="P07101"/>
<dbReference type="PhosphoSitePlus" id="P07101"/>
<dbReference type="BioMuta" id="TH"/>
<dbReference type="DMDM" id="239938945"/>
<dbReference type="MassIVE" id="P07101"/>
<dbReference type="PaxDb" id="9606-ENSP00000370571"/>
<dbReference type="PeptideAtlas" id="P07101"/>
<dbReference type="ProteomicsDB" id="51950">
    <molecule id="P07101-1"/>
</dbReference>
<dbReference type="ProteomicsDB" id="51951">
    <molecule id="P07101-2"/>
</dbReference>
<dbReference type="ProteomicsDB" id="51952">
    <molecule id="P07101-3"/>
</dbReference>
<dbReference type="ProteomicsDB" id="51953">
    <molecule id="P07101-4"/>
</dbReference>
<dbReference type="ProteomicsDB" id="58784"/>
<dbReference type="Antibodypedia" id="3748">
    <property type="antibodies" value="1694 antibodies from 49 providers"/>
</dbReference>
<dbReference type="DNASU" id="7054"/>
<dbReference type="Ensembl" id="ENST00000333684.9">
    <molecule id="P07101-6"/>
    <property type="protein sequence ID" value="ENSP00000328814.6"/>
    <property type="gene ID" value="ENSG00000180176.15"/>
</dbReference>
<dbReference type="Ensembl" id="ENST00000352909.8">
    <molecule id="P07101-3"/>
    <property type="protein sequence ID" value="ENSP00000325951.4"/>
    <property type="gene ID" value="ENSG00000180176.15"/>
</dbReference>
<dbReference type="Ensembl" id="ENST00000381175.5">
    <molecule id="P07101-2"/>
    <property type="protein sequence ID" value="ENSP00000370567.1"/>
    <property type="gene ID" value="ENSG00000180176.15"/>
</dbReference>
<dbReference type="Ensembl" id="ENST00000381178.5">
    <molecule id="P07101-1"/>
    <property type="protein sequence ID" value="ENSP00000370571.1"/>
    <property type="gene ID" value="ENSG00000180176.15"/>
</dbReference>
<dbReference type="GeneID" id="7054"/>
<dbReference type="KEGG" id="hsa:7054"/>
<dbReference type="MANE-Select" id="ENST00000352909.8">
    <molecule id="P07101-3"/>
    <property type="protein sequence ID" value="ENSP00000325951.4"/>
    <property type="RefSeq nucleotide sequence ID" value="NM_000360.4"/>
    <property type="RefSeq protein sequence ID" value="NP_000351.2"/>
</dbReference>
<dbReference type="UCSC" id="uc001lvp.3">
    <molecule id="P07101-1"/>
    <property type="organism name" value="human"/>
</dbReference>
<dbReference type="AGR" id="HGNC:11782"/>
<dbReference type="CTD" id="7054"/>
<dbReference type="DisGeNET" id="7054"/>
<dbReference type="GeneCards" id="TH"/>
<dbReference type="GeneReviews" id="TH"/>
<dbReference type="HGNC" id="HGNC:11782">
    <property type="gene designation" value="TH"/>
</dbReference>
<dbReference type="HPA" id="ENSG00000180176">
    <property type="expression patterns" value="Group enriched (adrenal gland, brain)"/>
</dbReference>
<dbReference type="MalaCards" id="TH"/>
<dbReference type="MIM" id="191290">
    <property type="type" value="gene"/>
</dbReference>
<dbReference type="MIM" id="605407">
    <property type="type" value="phenotype"/>
</dbReference>
<dbReference type="neXtProt" id="NX_P07101"/>
<dbReference type="OpenTargets" id="ENSG00000180176"/>
<dbReference type="Orphanet" id="101150">
    <property type="disease" value="Autosomal recessive dopa-responsive dystonia"/>
</dbReference>
<dbReference type="PharmGKB" id="PA351"/>
<dbReference type="VEuPathDB" id="HostDB:ENSG00000180176"/>
<dbReference type="eggNOG" id="KOG3820">
    <property type="taxonomic scope" value="Eukaryota"/>
</dbReference>
<dbReference type="GeneTree" id="ENSGT00950000182885"/>
<dbReference type="HOGENOM" id="CLU_023198_3_0_1"/>
<dbReference type="InParanoid" id="P07101"/>
<dbReference type="OMA" id="SVEHGYP"/>
<dbReference type="OrthoDB" id="983542at2759"/>
<dbReference type="PAN-GO" id="P07101">
    <property type="GO annotations" value="8 GO annotations based on evolutionary models"/>
</dbReference>
<dbReference type="PhylomeDB" id="P07101"/>
<dbReference type="TreeFam" id="TF313327"/>
<dbReference type="BRENDA" id="1.14.16.2">
    <property type="organism ID" value="2681"/>
</dbReference>
<dbReference type="PathwayCommons" id="P07101"/>
<dbReference type="Reactome" id="R-HSA-209905">
    <property type="pathway name" value="Catecholamine biosynthesis"/>
</dbReference>
<dbReference type="SABIO-RK" id="P07101"/>
<dbReference type="SignaLink" id="P07101"/>
<dbReference type="SIGNOR" id="P07101"/>
<dbReference type="UniPathway" id="UPA00747">
    <property type="reaction ID" value="UER00733"/>
</dbReference>
<dbReference type="BioGRID-ORCS" id="7054">
    <property type="hits" value="9 hits in 1159 CRISPR screens"/>
</dbReference>
<dbReference type="EvolutionaryTrace" id="P07101"/>
<dbReference type="GeneWiki" id="Tyrosine_hydroxylase"/>
<dbReference type="GenomeRNAi" id="7054"/>
<dbReference type="Pharos" id="P07101">
    <property type="development level" value="Tclin"/>
</dbReference>
<dbReference type="PRO" id="PR:P07101"/>
<dbReference type="Proteomes" id="UP000005640">
    <property type="component" value="Chromosome 11"/>
</dbReference>
<dbReference type="RNAct" id="P07101">
    <property type="molecule type" value="protein"/>
</dbReference>
<dbReference type="Bgee" id="ENSG00000180176">
    <property type="expression patterns" value="Expressed in substantia nigra pars reticulata and 105 other cell types or tissues"/>
</dbReference>
<dbReference type="ExpressionAtlas" id="P07101">
    <property type="expression patterns" value="baseline and differential"/>
</dbReference>
<dbReference type="GO" id="GO:0030424">
    <property type="term" value="C:axon"/>
    <property type="evidence" value="ECO:0000318"/>
    <property type="project" value="GO_Central"/>
</dbReference>
<dbReference type="GO" id="GO:0005737">
    <property type="term" value="C:cytoplasm"/>
    <property type="evidence" value="ECO:0000314"/>
    <property type="project" value="UniProtKB"/>
</dbReference>
<dbReference type="GO" id="GO:0009898">
    <property type="term" value="C:cytoplasmic side of plasma membrane"/>
    <property type="evidence" value="ECO:0000314"/>
    <property type="project" value="BHF-UCL"/>
</dbReference>
<dbReference type="GO" id="GO:0031410">
    <property type="term" value="C:cytoplasmic vesicle"/>
    <property type="evidence" value="ECO:0000314"/>
    <property type="project" value="BHF-UCL"/>
</dbReference>
<dbReference type="GO" id="GO:0005829">
    <property type="term" value="C:cytosol"/>
    <property type="evidence" value="ECO:0000304"/>
    <property type="project" value="Reactome"/>
</dbReference>
<dbReference type="GO" id="GO:0033162">
    <property type="term" value="C:melanosome membrane"/>
    <property type="evidence" value="ECO:0000314"/>
    <property type="project" value="BHF-UCL"/>
</dbReference>
<dbReference type="GO" id="GO:0043005">
    <property type="term" value="C:neuron projection"/>
    <property type="evidence" value="ECO:0000314"/>
    <property type="project" value="BHF-UCL"/>
</dbReference>
<dbReference type="GO" id="GO:0005634">
    <property type="term" value="C:nucleus"/>
    <property type="evidence" value="ECO:0000314"/>
    <property type="project" value="UniProtKB"/>
</dbReference>
<dbReference type="GO" id="GO:0043204">
    <property type="term" value="C:perikaryon"/>
    <property type="evidence" value="ECO:0000250"/>
    <property type="project" value="BHF-UCL"/>
</dbReference>
<dbReference type="GO" id="GO:0048471">
    <property type="term" value="C:perinuclear region of cytoplasm"/>
    <property type="evidence" value="ECO:0000250"/>
    <property type="project" value="UniProtKB"/>
</dbReference>
<dbReference type="GO" id="GO:0005790">
    <property type="term" value="C:smooth endoplasmic reticulum"/>
    <property type="evidence" value="ECO:0000314"/>
    <property type="project" value="BHF-UCL"/>
</dbReference>
<dbReference type="GO" id="GO:0008021">
    <property type="term" value="C:synaptic vesicle"/>
    <property type="evidence" value="ECO:0007669"/>
    <property type="project" value="UniProtKB-SubCell"/>
</dbReference>
<dbReference type="GO" id="GO:0019899">
    <property type="term" value="F:enzyme binding"/>
    <property type="evidence" value="ECO:0000353"/>
    <property type="project" value="ParkinsonsUK-UCL"/>
</dbReference>
<dbReference type="GO" id="GO:0042802">
    <property type="term" value="F:identical protein binding"/>
    <property type="evidence" value="ECO:0000353"/>
    <property type="project" value="IntAct"/>
</dbReference>
<dbReference type="GO" id="GO:0005506">
    <property type="term" value="F:iron ion binding"/>
    <property type="evidence" value="ECO:0007669"/>
    <property type="project" value="InterPro"/>
</dbReference>
<dbReference type="GO" id="GO:0004511">
    <property type="term" value="F:tyrosine 3-monooxygenase activity"/>
    <property type="evidence" value="ECO:0000314"/>
    <property type="project" value="UniProtKB"/>
</dbReference>
<dbReference type="GO" id="GO:0009653">
    <property type="term" value="P:anatomical structure morphogenesis"/>
    <property type="evidence" value="ECO:0000304"/>
    <property type="project" value="ProtInc"/>
</dbReference>
<dbReference type="GO" id="GO:0009887">
    <property type="term" value="P:animal organ morphogenesis"/>
    <property type="evidence" value="ECO:0000250"/>
    <property type="project" value="BHF-UCL"/>
</dbReference>
<dbReference type="GO" id="GO:0042416">
    <property type="term" value="P:dopamine biosynthetic process"/>
    <property type="evidence" value="ECO:0000314"/>
    <property type="project" value="BHF-UCL"/>
</dbReference>
<dbReference type="GO" id="GO:0006585">
    <property type="term" value="P:dopamine biosynthetic process from tyrosine"/>
    <property type="evidence" value="ECO:0000318"/>
    <property type="project" value="GO_Central"/>
</dbReference>
<dbReference type="GO" id="GO:0042755">
    <property type="term" value="P:eating behavior"/>
    <property type="evidence" value="ECO:0007669"/>
    <property type="project" value="Ensembl"/>
</dbReference>
<dbReference type="GO" id="GO:0048596">
    <property type="term" value="P:embryonic camera-type eye morphogenesis"/>
    <property type="evidence" value="ECO:0000250"/>
    <property type="project" value="BHF-UCL"/>
</dbReference>
<dbReference type="GO" id="GO:0042418">
    <property type="term" value="P:epinephrine biosynthetic process"/>
    <property type="evidence" value="ECO:0000314"/>
    <property type="project" value="BHF-UCL"/>
</dbReference>
<dbReference type="GO" id="GO:0042462">
    <property type="term" value="P:eye photoreceptor cell development"/>
    <property type="evidence" value="ECO:0000250"/>
    <property type="project" value="BHF-UCL"/>
</dbReference>
<dbReference type="GO" id="GO:0007507">
    <property type="term" value="P:heart development"/>
    <property type="evidence" value="ECO:0000250"/>
    <property type="project" value="BHF-UCL"/>
</dbReference>
<dbReference type="GO" id="GO:0003007">
    <property type="term" value="P:heart morphogenesis"/>
    <property type="evidence" value="ECO:0000303"/>
    <property type="project" value="BHF-UCL"/>
</dbReference>
<dbReference type="GO" id="GO:1990384">
    <property type="term" value="P:hyaloid vascular plexus regression"/>
    <property type="evidence" value="ECO:0000250"/>
    <property type="project" value="UniProtKB"/>
</dbReference>
<dbReference type="GO" id="GO:0007612">
    <property type="term" value="P:learning"/>
    <property type="evidence" value="ECO:0000250"/>
    <property type="project" value="BHF-UCL"/>
</dbReference>
<dbReference type="GO" id="GO:0007626">
    <property type="term" value="P:locomotory behavior"/>
    <property type="evidence" value="ECO:0000250"/>
    <property type="project" value="BHF-UCL"/>
</dbReference>
<dbReference type="GO" id="GO:0007617">
    <property type="term" value="P:mating behavior"/>
    <property type="evidence" value="ECO:0007669"/>
    <property type="project" value="Ensembl"/>
</dbReference>
<dbReference type="GO" id="GO:0007613">
    <property type="term" value="P:memory"/>
    <property type="evidence" value="ECO:0000250"/>
    <property type="project" value="BHF-UCL"/>
</dbReference>
<dbReference type="GO" id="GO:0042421">
    <property type="term" value="P:norepinephrine biosynthetic process"/>
    <property type="evidence" value="ECO:0000314"/>
    <property type="project" value="BHF-UCL"/>
</dbReference>
<dbReference type="GO" id="GO:0043473">
    <property type="term" value="P:pigmentation"/>
    <property type="evidence" value="ECO:0000304"/>
    <property type="project" value="BHF-UCL"/>
</dbReference>
<dbReference type="GO" id="GO:0008016">
    <property type="term" value="P:regulation of heart contraction"/>
    <property type="evidence" value="ECO:0000250"/>
    <property type="project" value="BHF-UCL"/>
</dbReference>
<dbReference type="GO" id="GO:0045471">
    <property type="term" value="P:response to ethanol"/>
    <property type="evidence" value="ECO:0000314"/>
    <property type="project" value="BHF-UCL"/>
</dbReference>
<dbReference type="GO" id="GO:0001666">
    <property type="term" value="P:response to hypoxia"/>
    <property type="evidence" value="ECO:0000314"/>
    <property type="project" value="BHF-UCL"/>
</dbReference>
<dbReference type="GO" id="GO:0001963">
    <property type="term" value="P:synaptic transmission, dopaminergic"/>
    <property type="evidence" value="ECO:0000250"/>
    <property type="project" value="BHF-UCL"/>
</dbReference>
<dbReference type="GO" id="GO:0007601">
    <property type="term" value="P:visual perception"/>
    <property type="evidence" value="ECO:0000250"/>
    <property type="project" value="BHF-UCL"/>
</dbReference>
<dbReference type="CDD" id="cd04930">
    <property type="entry name" value="ACT_TH"/>
    <property type="match status" value="1"/>
</dbReference>
<dbReference type="CDD" id="cd03345">
    <property type="entry name" value="eu_TyrOH"/>
    <property type="match status" value="1"/>
</dbReference>
<dbReference type="FunFam" id="1.10.800.10:FF:000002">
    <property type="entry name" value="Tyrosine 3-monooxygenase"/>
    <property type="match status" value="1"/>
</dbReference>
<dbReference type="FunFam" id="3.30.70.260:FF:000024">
    <property type="entry name" value="Tyrosine 3-monooxygenase"/>
    <property type="match status" value="1"/>
</dbReference>
<dbReference type="Gene3D" id="3.30.70.260">
    <property type="match status" value="1"/>
</dbReference>
<dbReference type="Gene3D" id="1.10.800.10">
    <property type="entry name" value="Aromatic amino acid hydroxylase"/>
    <property type="match status" value="1"/>
</dbReference>
<dbReference type="InterPro" id="IPR045865">
    <property type="entry name" value="ACT-like_dom_sf"/>
</dbReference>
<dbReference type="InterPro" id="IPR001273">
    <property type="entry name" value="ArAA_hydroxylase"/>
</dbReference>
<dbReference type="InterPro" id="IPR018301">
    <property type="entry name" value="ArAA_hydroxylase_Fe/CU_BS"/>
</dbReference>
<dbReference type="InterPro" id="IPR036951">
    <property type="entry name" value="ArAA_hydroxylase_sf"/>
</dbReference>
<dbReference type="InterPro" id="IPR036329">
    <property type="entry name" value="Aro-AA_hydroxylase_C_sf"/>
</dbReference>
<dbReference type="InterPro" id="IPR019774">
    <property type="entry name" value="Aromatic-AA_hydroxylase_C"/>
</dbReference>
<dbReference type="InterPro" id="IPR041903">
    <property type="entry name" value="Eu_TyrOH_cat"/>
</dbReference>
<dbReference type="InterPro" id="IPR049321">
    <property type="entry name" value="TH_ACT"/>
</dbReference>
<dbReference type="InterPro" id="IPR005962">
    <property type="entry name" value="Tyr_3_mOase"/>
</dbReference>
<dbReference type="InterPro" id="IPR019773">
    <property type="entry name" value="Tyrosine_3-monooxygenase-like"/>
</dbReference>
<dbReference type="InterPro" id="IPR021164">
    <property type="entry name" value="Tyrosine_hydroxylase_CS"/>
</dbReference>
<dbReference type="NCBIfam" id="TIGR01269">
    <property type="entry name" value="Tyr_3_monoox"/>
    <property type="match status" value="1"/>
</dbReference>
<dbReference type="PANTHER" id="PTHR11473">
    <property type="entry name" value="AROMATIC AMINO ACID HYDROXYLASE"/>
    <property type="match status" value="1"/>
</dbReference>
<dbReference type="PANTHER" id="PTHR11473:SF18">
    <property type="entry name" value="TYROSINE 3-MONOOXYGENASE"/>
    <property type="match status" value="1"/>
</dbReference>
<dbReference type="Pfam" id="PF00351">
    <property type="entry name" value="Biopterin_H"/>
    <property type="match status" value="1"/>
</dbReference>
<dbReference type="Pfam" id="PF21417">
    <property type="entry name" value="TH_ACT"/>
    <property type="match status" value="1"/>
</dbReference>
<dbReference type="Pfam" id="PF12549">
    <property type="entry name" value="TOH_N"/>
    <property type="match status" value="2"/>
</dbReference>
<dbReference type="PIRSF" id="PIRSF000336">
    <property type="entry name" value="TH"/>
    <property type="match status" value="1"/>
</dbReference>
<dbReference type="PRINTS" id="PR00372">
    <property type="entry name" value="FYWHYDRXLASE"/>
</dbReference>
<dbReference type="SUPFAM" id="SSF55021">
    <property type="entry name" value="ACT-like"/>
    <property type="match status" value="1"/>
</dbReference>
<dbReference type="SUPFAM" id="SSF56534">
    <property type="entry name" value="Aromatic aminoacid monoxygenases, catalytic and oligomerization domains"/>
    <property type="match status" value="1"/>
</dbReference>
<dbReference type="PROSITE" id="PS00367">
    <property type="entry name" value="BH4_AAA_HYDROXYL_1"/>
    <property type="match status" value="1"/>
</dbReference>
<dbReference type="PROSITE" id="PS51410">
    <property type="entry name" value="BH4_AAA_HYDROXYL_2"/>
    <property type="match status" value="1"/>
</dbReference>
<evidence type="ECO:0000250" key="1">
    <source>
        <dbReference type="UniProtKB" id="P04177"/>
    </source>
</evidence>
<evidence type="ECO:0000250" key="2">
    <source>
        <dbReference type="UniProtKB" id="P24529"/>
    </source>
</evidence>
<evidence type="ECO:0000256" key="3">
    <source>
        <dbReference type="SAM" id="MobiDB-lite"/>
    </source>
</evidence>
<evidence type="ECO:0000269" key="4">
    <source>
    </source>
</evidence>
<evidence type="ECO:0000269" key="5">
    <source>
    </source>
</evidence>
<evidence type="ECO:0000269" key="6">
    <source>
    </source>
</evidence>
<evidence type="ECO:0000269" key="7">
    <source>
    </source>
</evidence>
<evidence type="ECO:0000269" key="8">
    <source>
    </source>
</evidence>
<evidence type="ECO:0000269" key="9">
    <source>
    </source>
</evidence>
<evidence type="ECO:0000269" key="10">
    <source>
    </source>
</evidence>
<evidence type="ECO:0000269" key="11">
    <source>
    </source>
</evidence>
<evidence type="ECO:0000269" key="12">
    <source>
    </source>
</evidence>
<evidence type="ECO:0000269" key="13">
    <source>
    </source>
</evidence>
<evidence type="ECO:0000269" key="14">
    <source>
    </source>
</evidence>
<evidence type="ECO:0000269" key="15">
    <source>
    </source>
</evidence>
<evidence type="ECO:0000269" key="16">
    <source>
    </source>
</evidence>
<evidence type="ECO:0000269" key="17">
    <source>
    </source>
</evidence>
<evidence type="ECO:0000269" key="18">
    <source>
    </source>
</evidence>
<evidence type="ECO:0000269" key="19">
    <source>
    </source>
</evidence>
<evidence type="ECO:0000269" key="20">
    <source>
    </source>
</evidence>
<evidence type="ECO:0000269" key="21">
    <source>
    </source>
</evidence>
<evidence type="ECO:0000269" key="22">
    <source>
    </source>
</evidence>
<evidence type="ECO:0000269" key="23">
    <source>
    </source>
</evidence>
<evidence type="ECO:0000269" key="24">
    <source>
    </source>
</evidence>
<evidence type="ECO:0000269" key="25">
    <source>
    </source>
</evidence>
<evidence type="ECO:0000269" key="26">
    <source>
    </source>
</evidence>
<evidence type="ECO:0000269" key="27">
    <source>
    </source>
</evidence>
<evidence type="ECO:0000269" key="28">
    <source>
    </source>
</evidence>
<evidence type="ECO:0000269" key="29">
    <source>
    </source>
</evidence>
<evidence type="ECO:0000269" key="30">
    <source>
    </source>
</evidence>
<evidence type="ECO:0000269" key="31">
    <source>
    </source>
</evidence>
<evidence type="ECO:0000269" key="32">
    <source>
    </source>
</evidence>
<evidence type="ECO:0000269" key="33">
    <source>
    </source>
</evidence>
<evidence type="ECO:0000269" key="34">
    <source>
    </source>
</evidence>
<evidence type="ECO:0000269" key="35">
    <source>
    </source>
</evidence>
<evidence type="ECO:0000269" key="36">
    <source>
    </source>
</evidence>
<evidence type="ECO:0000269" key="37">
    <source>
    </source>
</evidence>
<evidence type="ECO:0000269" key="38">
    <source>
    </source>
</evidence>
<evidence type="ECO:0000269" key="39">
    <source ref="18"/>
</evidence>
<evidence type="ECO:0000303" key="40">
    <source>
    </source>
</evidence>
<evidence type="ECO:0000303" key="41">
    <source>
    </source>
</evidence>
<evidence type="ECO:0000303" key="42">
    <source>
    </source>
</evidence>
<evidence type="ECO:0000303" key="43">
    <source>
    </source>
</evidence>
<evidence type="ECO:0000305" key="44"/>
<evidence type="ECO:0000305" key="45">
    <source>
    </source>
</evidence>
<evidence type="ECO:0000312" key="46">
    <source>
        <dbReference type="HGNC" id="HGNC:11782"/>
    </source>
</evidence>
<evidence type="ECO:0007744" key="47">
    <source>
        <dbReference type="PDB" id="2XSN"/>
    </source>
</evidence>
<evidence type="ECO:0007829" key="48">
    <source>
        <dbReference type="PDB" id="2XSN"/>
    </source>
</evidence>
<evidence type="ECO:0007829" key="49">
    <source>
        <dbReference type="PDB" id="6ZZU"/>
    </source>
</evidence>
<name>TY3H_HUMAN</name>